<accession>P46013</accession>
<accession>Q5VWH2</accession>
<organism>
    <name type="scientific">Homo sapiens</name>
    <name type="common">Human</name>
    <dbReference type="NCBI Taxonomy" id="9606"/>
    <lineage>
        <taxon>Eukaryota</taxon>
        <taxon>Metazoa</taxon>
        <taxon>Chordata</taxon>
        <taxon>Craniata</taxon>
        <taxon>Vertebrata</taxon>
        <taxon>Euteleostomi</taxon>
        <taxon>Mammalia</taxon>
        <taxon>Eutheria</taxon>
        <taxon>Euarchontoglires</taxon>
        <taxon>Primates</taxon>
        <taxon>Haplorrhini</taxon>
        <taxon>Catarrhini</taxon>
        <taxon>Hominidae</taxon>
        <taxon>Homo</taxon>
    </lineage>
</organism>
<evidence type="ECO:0000250" key="1">
    <source>
        <dbReference type="UniProtKB" id="E9PVX6"/>
    </source>
</evidence>
<evidence type="ECO:0000255" key="2"/>
<evidence type="ECO:0000255" key="3">
    <source>
        <dbReference type="PROSITE-ProRule" id="PRU00086"/>
    </source>
</evidence>
<evidence type="ECO:0000256" key="4">
    <source>
        <dbReference type="SAM" id="MobiDB-lite"/>
    </source>
</evidence>
<evidence type="ECO:0000269" key="5">
    <source>
    </source>
</evidence>
<evidence type="ECO:0000269" key="6">
    <source>
    </source>
</evidence>
<evidence type="ECO:0000269" key="7">
    <source>
    </source>
</evidence>
<evidence type="ECO:0000269" key="8">
    <source>
    </source>
</evidence>
<evidence type="ECO:0000269" key="9">
    <source>
    </source>
</evidence>
<evidence type="ECO:0000269" key="10">
    <source>
    </source>
</evidence>
<evidence type="ECO:0000269" key="11">
    <source>
    </source>
</evidence>
<evidence type="ECO:0000269" key="12">
    <source>
    </source>
</evidence>
<evidence type="ECO:0000269" key="13">
    <source>
    </source>
</evidence>
<evidence type="ECO:0000269" key="14">
    <source>
    </source>
</evidence>
<evidence type="ECO:0000269" key="15">
    <source>
    </source>
</evidence>
<evidence type="ECO:0000269" key="16">
    <source>
    </source>
</evidence>
<evidence type="ECO:0000269" key="17">
    <source>
    </source>
</evidence>
<evidence type="ECO:0000269" key="18">
    <source>
    </source>
</evidence>
<evidence type="ECO:0000269" key="19">
    <source>
    </source>
</evidence>
<evidence type="ECO:0000269" key="20">
    <source>
    </source>
</evidence>
<evidence type="ECO:0000269" key="21">
    <source>
    </source>
</evidence>
<evidence type="ECO:0000269" key="22">
    <source>
    </source>
</evidence>
<evidence type="ECO:0000269" key="23">
    <source>
    </source>
</evidence>
<evidence type="ECO:0000269" key="24">
    <source>
    </source>
</evidence>
<evidence type="ECO:0000269" key="25">
    <source>
    </source>
</evidence>
<evidence type="ECO:0000269" key="26">
    <source>
    </source>
</evidence>
<evidence type="ECO:0000269" key="27">
    <source>
    </source>
</evidence>
<evidence type="ECO:0000269" key="28">
    <source>
    </source>
</evidence>
<evidence type="ECO:0000269" key="29">
    <source>
    </source>
</evidence>
<evidence type="ECO:0000303" key="30">
    <source>
    </source>
</evidence>
<evidence type="ECO:0000303" key="31">
    <source>
    </source>
</evidence>
<evidence type="ECO:0000303" key="32">
    <source>
    </source>
</evidence>
<evidence type="ECO:0000305" key="33"/>
<evidence type="ECO:0000305" key="34">
    <source>
    </source>
</evidence>
<evidence type="ECO:0000305" key="35">
    <source>
    </source>
</evidence>
<evidence type="ECO:0000305" key="36">
    <source>
    </source>
</evidence>
<evidence type="ECO:0000312" key="37">
    <source>
        <dbReference type="HGNC" id="HGNC:7107"/>
    </source>
</evidence>
<evidence type="ECO:0007744" key="38">
    <source>
    </source>
</evidence>
<evidence type="ECO:0007744" key="39">
    <source>
    </source>
</evidence>
<evidence type="ECO:0007744" key="40">
    <source>
    </source>
</evidence>
<evidence type="ECO:0007744" key="41">
    <source>
    </source>
</evidence>
<evidence type="ECO:0007744" key="42">
    <source>
    </source>
</evidence>
<evidence type="ECO:0007744" key="43">
    <source>
    </source>
</evidence>
<evidence type="ECO:0007744" key="44">
    <source>
    </source>
</evidence>
<evidence type="ECO:0007744" key="45">
    <source>
    </source>
</evidence>
<evidence type="ECO:0007744" key="46">
    <source>
    </source>
</evidence>
<evidence type="ECO:0007744" key="47">
    <source>
    </source>
</evidence>
<evidence type="ECO:0007744" key="48">
    <source>
    </source>
</evidence>
<evidence type="ECO:0007744" key="49">
    <source>
    </source>
</evidence>
<evidence type="ECO:0007744" key="50">
    <source>
    </source>
</evidence>
<evidence type="ECO:0007744" key="51">
    <source>
    </source>
</evidence>
<evidence type="ECO:0007744" key="52">
    <source>
    </source>
</evidence>
<evidence type="ECO:0007744" key="53">
    <source>
    </source>
</evidence>
<evidence type="ECO:0007744" key="54">
    <source>
    </source>
</evidence>
<evidence type="ECO:0007829" key="55">
    <source>
        <dbReference type="PDB" id="1R21"/>
    </source>
</evidence>
<evidence type="ECO:0007829" key="56">
    <source>
        <dbReference type="PDB" id="2AFF"/>
    </source>
</evidence>
<evidence type="ECO:0007829" key="57">
    <source>
        <dbReference type="PDB" id="5J28"/>
    </source>
</evidence>
<feature type="chain" id="PRO_0000084301" description="Proliferation marker protein Ki-67">
    <location>
        <begin position="1"/>
        <end position="3256"/>
    </location>
</feature>
<feature type="domain" description="FHA" evidence="3">
    <location>
        <begin position="27"/>
        <end position="76"/>
    </location>
</feature>
<feature type="domain" description="PP1-binding" evidence="34 35">
    <location>
        <begin position="502"/>
        <end position="549"/>
    </location>
</feature>
<feature type="repeat" description="K167R 1" evidence="2">
    <location>
        <begin position="1001"/>
        <end position="1112"/>
    </location>
</feature>
<feature type="repeat" description="K167R 2" evidence="2">
    <location>
        <begin position="1123"/>
        <end position="1234"/>
    </location>
</feature>
<feature type="repeat" description="K167R 3" evidence="2">
    <location>
        <begin position="1245"/>
        <end position="1356"/>
    </location>
</feature>
<feature type="repeat" description="K167R 4" evidence="2">
    <location>
        <begin position="1367"/>
        <end position="1477"/>
    </location>
</feature>
<feature type="repeat" description="K167R 5" evidence="2">
    <location>
        <begin position="1488"/>
        <end position="1597"/>
    </location>
</feature>
<feature type="repeat" description="K167R 6" evidence="2">
    <location>
        <begin position="1609"/>
        <end position="1720"/>
    </location>
</feature>
<feature type="repeat" description="K167R 7" evidence="2">
    <location>
        <begin position="1731"/>
        <end position="1842"/>
    </location>
</feature>
<feature type="repeat" description="K167R 8" evidence="2">
    <location>
        <begin position="1854"/>
        <end position="1964"/>
    </location>
</feature>
<feature type="repeat" description="K167R 9" evidence="2">
    <location>
        <begin position="1975"/>
        <end position="2086"/>
    </location>
</feature>
<feature type="repeat" description="K167R 10" evidence="2">
    <location>
        <begin position="2097"/>
        <end position="2204"/>
    </location>
</feature>
<feature type="repeat" description="K167R 11" evidence="2">
    <location>
        <begin position="2215"/>
        <end position="2326"/>
    </location>
</feature>
<feature type="repeat" description="K167R 12" evidence="2">
    <location>
        <begin position="2336"/>
        <end position="2447"/>
    </location>
</feature>
<feature type="repeat" description="K167R 13" evidence="2">
    <location>
        <begin position="2458"/>
        <end position="2569"/>
    </location>
</feature>
<feature type="repeat" description="K167R 14" evidence="2">
    <location>
        <begin position="2580"/>
        <end position="2688"/>
    </location>
</feature>
<feature type="repeat" description="K167R 15" evidence="2">
    <location>
        <begin position="2700"/>
        <end position="2805"/>
    </location>
</feature>
<feature type="repeat" description="K167R 16" evidence="2">
    <location>
        <begin position="2819"/>
        <end position="2928"/>
    </location>
</feature>
<feature type="region of interest" description="Disordered" evidence="4">
    <location>
        <begin position="101"/>
        <end position="199"/>
    </location>
</feature>
<feature type="region of interest" description="Disordered" evidence="4">
    <location>
        <begin position="271"/>
        <end position="426"/>
    </location>
</feature>
<feature type="region of interest" description="Positively charged patch (CP)" evidence="24">
    <location>
        <begin position="495"/>
        <end position="678"/>
    </location>
</feature>
<feature type="region of interest" description="Disordered" evidence="4">
    <location>
        <begin position="513"/>
        <end position="542"/>
    </location>
</feature>
<feature type="region of interest" description="Disordered" evidence="4">
    <location>
        <begin position="575"/>
        <end position="632"/>
    </location>
</feature>
<feature type="region of interest" description="Disordered" evidence="4">
    <location>
        <begin position="674"/>
        <end position="707"/>
    </location>
</feature>
<feature type="region of interest" description="Disordered" evidence="4">
    <location>
        <begin position="853"/>
        <end position="886"/>
    </location>
</feature>
<feature type="region of interest" description="16 X 122 AA approximate repeats" evidence="36">
    <location>
        <begin position="1000"/>
        <end position="2928"/>
    </location>
</feature>
<feature type="region of interest" description="Disordered" evidence="4">
    <location>
        <begin position="1045"/>
        <end position="1073"/>
    </location>
</feature>
<feature type="region of interest" description="Disordered" evidence="4">
    <location>
        <begin position="1109"/>
        <end position="1151"/>
    </location>
</feature>
<feature type="region of interest" description="Disordered" evidence="4">
    <location>
        <begin position="1246"/>
        <end position="1276"/>
    </location>
</feature>
<feature type="region of interest" description="Disordered" evidence="4">
    <location>
        <begin position="1323"/>
        <end position="1518"/>
    </location>
</feature>
<feature type="region of interest" description="Disordered" evidence="4">
    <location>
        <begin position="1597"/>
        <end position="1675"/>
    </location>
</feature>
<feature type="region of interest" description="Disordered" evidence="4">
    <location>
        <begin position="1689"/>
        <end position="1708"/>
    </location>
</feature>
<feature type="region of interest" description="Disordered" evidence="4">
    <location>
        <begin position="1717"/>
        <end position="1765"/>
    </location>
</feature>
<feature type="region of interest" description="Disordered" evidence="4">
    <location>
        <begin position="1771"/>
        <end position="1790"/>
    </location>
</feature>
<feature type="region of interest" description="Disordered" evidence="4">
    <location>
        <begin position="1801"/>
        <end position="1824"/>
    </location>
</feature>
<feature type="region of interest" description="Disordered" evidence="4">
    <location>
        <begin position="1839"/>
        <end position="1886"/>
    </location>
</feature>
<feature type="region of interest" description="Disordered" evidence="4">
    <location>
        <begin position="1961"/>
        <end position="2002"/>
    </location>
</feature>
<feature type="region of interest" description="Disordered" evidence="4">
    <location>
        <begin position="2017"/>
        <end position="2192"/>
    </location>
</feature>
<feature type="region of interest" description="Disordered" evidence="4">
    <location>
        <begin position="2205"/>
        <end position="2400"/>
    </location>
</feature>
<feature type="region of interest" description="Disordered" evidence="4">
    <location>
        <begin position="2445"/>
        <end position="2480"/>
    </location>
</feature>
<feature type="region of interest" description="Disordered" evidence="4">
    <location>
        <begin position="2497"/>
        <end position="2521"/>
    </location>
</feature>
<feature type="region of interest" description="Disordered" evidence="4">
    <location>
        <begin position="2570"/>
        <end position="3256"/>
    </location>
</feature>
<feature type="compositionally biased region" description="Basic and acidic residues" evidence="4">
    <location>
        <begin position="107"/>
        <end position="122"/>
    </location>
</feature>
<feature type="compositionally biased region" description="Basic and acidic residues" evidence="4">
    <location>
        <begin position="161"/>
        <end position="173"/>
    </location>
</feature>
<feature type="compositionally biased region" description="Polar residues" evidence="4">
    <location>
        <begin position="174"/>
        <end position="183"/>
    </location>
</feature>
<feature type="compositionally biased region" description="Basic and acidic residues" evidence="4">
    <location>
        <begin position="314"/>
        <end position="324"/>
    </location>
</feature>
<feature type="compositionally biased region" description="Polar residues" evidence="4">
    <location>
        <begin position="349"/>
        <end position="358"/>
    </location>
</feature>
<feature type="compositionally biased region" description="Polar residues" evidence="4">
    <location>
        <begin position="414"/>
        <end position="425"/>
    </location>
</feature>
<feature type="compositionally biased region" description="Polar residues" evidence="4">
    <location>
        <begin position="603"/>
        <end position="612"/>
    </location>
</feature>
<feature type="compositionally biased region" description="Basic residues" evidence="4">
    <location>
        <begin position="676"/>
        <end position="694"/>
    </location>
</feature>
<feature type="compositionally biased region" description="Polar residues" evidence="4">
    <location>
        <begin position="866"/>
        <end position="882"/>
    </location>
</feature>
<feature type="compositionally biased region" description="Basic and acidic residues" evidence="4">
    <location>
        <begin position="1052"/>
        <end position="1072"/>
    </location>
</feature>
<feature type="compositionally biased region" description="Polar residues" evidence="4">
    <location>
        <begin position="1253"/>
        <end position="1266"/>
    </location>
</feature>
<feature type="compositionally biased region" description="Basic and acidic residues" evidence="4">
    <location>
        <begin position="1394"/>
        <end position="1406"/>
    </location>
</feature>
<feature type="compositionally biased region" description="Basic and acidic residues" evidence="4">
    <location>
        <begin position="1418"/>
        <end position="1442"/>
    </location>
</feature>
<feature type="compositionally biased region" description="Basic and acidic residues" evidence="4">
    <location>
        <begin position="1660"/>
        <end position="1672"/>
    </location>
</feature>
<feature type="compositionally biased region" description="Basic and acidic residues" evidence="4">
    <location>
        <begin position="1722"/>
        <end position="1733"/>
    </location>
</feature>
<feature type="compositionally biased region" description="Polar residues" evidence="4">
    <location>
        <begin position="1861"/>
        <end position="1874"/>
    </location>
</feature>
<feature type="compositionally biased region" description="Basic and acidic residues" evidence="4">
    <location>
        <begin position="1966"/>
        <end position="1977"/>
    </location>
</feature>
<feature type="compositionally biased region" description="Basic and acidic residues" evidence="4">
    <location>
        <begin position="2028"/>
        <end position="2046"/>
    </location>
</feature>
<feature type="compositionally biased region" description="Basic and acidic residues" evidence="4">
    <location>
        <begin position="2061"/>
        <end position="2070"/>
    </location>
</feature>
<feature type="compositionally biased region" description="Basic and acidic residues" evidence="4">
    <location>
        <begin position="2087"/>
        <end position="2099"/>
    </location>
</feature>
<feature type="compositionally biased region" description="Basic and acidic residues" evidence="4">
    <location>
        <begin position="2145"/>
        <end position="2168"/>
    </location>
</feature>
<feature type="compositionally biased region" description="Basic and acidic residues" evidence="4">
    <location>
        <begin position="2449"/>
        <end position="2460"/>
    </location>
</feature>
<feature type="compositionally biased region" description="Polar residues" evidence="4">
    <location>
        <begin position="2463"/>
        <end position="2475"/>
    </location>
</feature>
<feature type="compositionally biased region" description="Polar residues" evidence="4">
    <location>
        <begin position="2501"/>
        <end position="2514"/>
    </location>
</feature>
<feature type="compositionally biased region" description="Basic and acidic residues" evidence="4">
    <location>
        <begin position="2609"/>
        <end position="2618"/>
    </location>
</feature>
<feature type="compositionally biased region" description="Basic and acidic residues" evidence="4">
    <location>
        <begin position="2632"/>
        <end position="2644"/>
    </location>
</feature>
<feature type="compositionally biased region" description="Basic and acidic residues" evidence="4">
    <location>
        <begin position="2660"/>
        <end position="2675"/>
    </location>
</feature>
<feature type="compositionally biased region" description="Polar residues" evidence="4">
    <location>
        <begin position="2685"/>
        <end position="2696"/>
    </location>
</feature>
<feature type="compositionally biased region" description="Basic and acidic residues" evidence="4">
    <location>
        <begin position="2751"/>
        <end position="2770"/>
    </location>
</feature>
<feature type="compositionally biased region" description="Basic and acidic residues" evidence="4">
    <location>
        <begin position="2810"/>
        <end position="2821"/>
    </location>
</feature>
<feature type="compositionally biased region" description="Basic and acidic residues" evidence="4">
    <location>
        <begin position="2869"/>
        <end position="2881"/>
    </location>
</feature>
<feature type="compositionally biased region" description="Polar residues" evidence="4">
    <location>
        <begin position="2941"/>
        <end position="2951"/>
    </location>
</feature>
<feature type="compositionally biased region" description="Polar residues" evidence="4">
    <location>
        <begin position="2982"/>
        <end position="2991"/>
    </location>
</feature>
<feature type="compositionally biased region" description="Basic residues" evidence="4">
    <location>
        <begin position="3029"/>
        <end position="3039"/>
    </location>
</feature>
<feature type="compositionally biased region" description="Basic and acidic residues" evidence="4">
    <location>
        <begin position="3071"/>
        <end position="3080"/>
    </location>
</feature>
<feature type="compositionally biased region" description="Basic and acidic residues" evidence="4">
    <location>
        <begin position="3113"/>
        <end position="3124"/>
    </location>
</feature>
<feature type="compositionally biased region" description="Basic and acidic residues" evidence="4">
    <location>
        <begin position="3138"/>
        <end position="3154"/>
    </location>
</feature>
<feature type="compositionally biased region" description="Polar residues" evidence="4">
    <location>
        <begin position="3207"/>
        <end position="3223"/>
    </location>
</feature>
<feature type="compositionally biased region" description="Basic and acidic residues" evidence="4">
    <location>
        <begin position="3228"/>
        <end position="3241"/>
    </location>
</feature>
<feature type="binding site" evidence="2">
    <location>
        <begin position="3034"/>
        <end position="3041"/>
    </location>
    <ligand>
        <name>ATP</name>
        <dbReference type="ChEBI" id="CHEBI:30616"/>
    </ligand>
</feature>
<feature type="modified residue" description="Phosphoserine" evidence="42 49">
    <location>
        <position position="125"/>
    </location>
</feature>
<feature type="modified residue" description="Phosphoserine" evidence="49">
    <location>
        <position position="128"/>
    </location>
</feature>
<feature type="modified residue" description="Phosphoserine" evidence="1">
    <location>
        <position position="166"/>
    </location>
</feature>
<feature type="modified residue" description="Phosphoserine" evidence="42">
    <location>
        <position position="264"/>
    </location>
</feature>
<feature type="modified residue" description="Phosphoserine" evidence="1">
    <location>
        <position position="296"/>
    </location>
</feature>
<feature type="modified residue" description="Phosphoserine" evidence="42 43 47 48 49">
    <location>
        <position position="308"/>
    </location>
</feature>
<feature type="modified residue" description="Phosphothreonine" evidence="38 42 49">
    <location>
        <position position="328"/>
    </location>
</feature>
<feature type="modified residue" description="Phosphothreonine" evidence="42 49">
    <location>
        <position position="347"/>
    </location>
</feature>
<feature type="modified residue" description="Phosphoserine" evidence="48">
    <location>
        <position position="352"/>
    </location>
</feature>
<feature type="modified residue" description="Phosphoserine" evidence="38 41 42 43 47 48 49">
    <location>
        <position position="357"/>
    </location>
</feature>
<feature type="modified residue" description="Phosphoserine" evidence="1">
    <location>
        <position position="374"/>
    </location>
</feature>
<feature type="modified residue" description="Phosphothreonine" evidence="42">
    <location>
        <position position="401"/>
    </location>
</feature>
<feature type="modified residue" description="Phosphoserine" evidence="49">
    <location>
        <position position="411"/>
    </location>
</feature>
<feature type="modified residue" description="Phosphoserine" evidence="49">
    <location>
        <position position="538"/>
    </location>
</feature>
<feature type="modified residue" description="Phosphothreonine" evidence="49">
    <location>
        <position position="543"/>
    </location>
</feature>
<feature type="modified residue" description="Phosphoserine" evidence="38 41 42 43 44 47 49">
    <location>
        <position position="579"/>
    </location>
</feature>
<feature type="modified residue" description="Phosphoserine" evidence="38 41 42 47 49">
    <location>
        <position position="584"/>
    </location>
</feature>
<feature type="modified residue" description="Phosphoserine" evidence="42 43 46 47 49">
    <location>
        <position position="648"/>
    </location>
</feature>
<feature type="modified residue" description="Phosphothreonine" evidence="42 49">
    <location>
        <position position="761"/>
    </location>
</feature>
<feature type="modified residue" description="Phosphoserine" evidence="42 49">
    <location>
        <position position="859"/>
    </location>
</feature>
<feature type="modified residue" description="Phosphothreonine" evidence="42">
    <location>
        <position position="1017"/>
    </location>
</feature>
<feature type="modified residue" description="Phosphoserine" evidence="42 49">
    <location>
        <position position="1071"/>
    </location>
</feature>
<feature type="modified residue" description="Phosphothreonine" evidence="42 47 49">
    <location>
        <position position="1091"/>
    </location>
</feature>
<feature type="modified residue" description="Phosphoserine" evidence="42 47 48 49">
    <location>
        <position position="1098"/>
    </location>
</feature>
<feature type="modified residue" description="Phosphothreonine" evidence="42 49">
    <location>
        <position position="1111"/>
    </location>
</feature>
<feature type="modified residue" description="Phosphoserine" evidence="38 42 46 47 48 49">
    <location>
        <position position="1131"/>
    </location>
</feature>
<feature type="modified residue" description="Phosphothreonine" evidence="42">
    <location>
        <position position="1139"/>
    </location>
</feature>
<feature type="modified residue" description="Phosphoserine" evidence="42">
    <location>
        <position position="1142"/>
    </location>
</feature>
<feature type="modified residue" description="Phosphothreonine" evidence="47">
    <location>
        <position position="1167"/>
    </location>
</feature>
<feature type="modified residue" description="Phosphoserine" evidence="1">
    <location>
        <position position="1169"/>
    </location>
</feature>
<feature type="modified residue" description="Phosphothreonine" evidence="49">
    <location>
        <position position="1176"/>
    </location>
</feature>
<feature type="modified residue" description="Phosphothreonine" evidence="47">
    <location>
        <position position="1193"/>
    </location>
</feature>
<feature type="modified residue" description="Phosphoserine" evidence="42 47 49">
    <location>
        <position position="1207"/>
    </location>
</feature>
<feature type="modified residue" description="Phosphothreonine" evidence="40 47 49">
    <location>
        <position position="1233"/>
    </location>
</feature>
<feature type="modified residue" description="Phosphoserine" evidence="42">
    <location>
        <position position="1253"/>
    </location>
</feature>
<feature type="modified residue" description="Phosphoserine" evidence="42">
    <location>
        <position position="1256"/>
    </location>
</feature>
<feature type="modified residue" description="Phosphothreonine" evidence="42">
    <location>
        <position position="1261"/>
    </location>
</feature>
<feature type="modified residue" description="Phosphothreonine" evidence="42">
    <location>
        <position position="1298"/>
    </location>
</feature>
<feature type="modified residue" description="Phosphothreonine" evidence="42 47">
    <location>
        <position position="1315"/>
    </location>
</feature>
<feature type="modified residue" description="Phosphothreonine" evidence="38 42 47 49">
    <location>
        <position position="1327"/>
    </location>
</feature>
<feature type="modified residue" description="Phosphoserine" evidence="42 47 49">
    <location>
        <position position="1329"/>
    </location>
</feature>
<feature type="modified residue" description="Phosphothreonine" evidence="42 46 47 49">
    <location>
        <position position="1335"/>
    </location>
</feature>
<feature type="modified residue" description="Phosphothreonine" evidence="40 42 47 49">
    <location>
        <position position="1355"/>
    </location>
</feature>
<feature type="modified residue" description="Phosphoserine" evidence="42">
    <location>
        <position position="1376"/>
    </location>
</feature>
<feature type="modified residue" description="Phosphothreonine" evidence="42">
    <location>
        <position position="1383"/>
    </location>
</feature>
<feature type="modified residue" description="Phosphoserine" evidence="1">
    <location>
        <position position="1386"/>
    </location>
</feature>
<feature type="modified residue" description="Phosphothreonine" evidence="1">
    <location>
        <position position="1420"/>
    </location>
</feature>
<feature type="modified residue" description="Phosphothreonine" evidence="1">
    <location>
        <position position="1437"/>
    </location>
</feature>
<feature type="modified residue" description="Phosphoserine" evidence="48">
    <location>
        <position position="1496"/>
    </location>
</feature>
<feature type="modified residue" description="Phosphothreonine" evidence="42 49">
    <location>
        <position position="1503"/>
    </location>
</feature>
<feature type="modified residue" description="Phosphoserine" evidence="42">
    <location>
        <position position="1506"/>
    </location>
</feature>
<feature type="modified residue" description="Phosphothreonine" evidence="42">
    <location>
        <position position="1540"/>
    </location>
</feature>
<feature type="modified residue" description="Phosphotyrosine" evidence="42">
    <location>
        <position position="1552"/>
    </location>
</feature>
<feature type="modified residue" description="Phosphothreonine" evidence="42 46 47 49">
    <location>
        <position position="1557"/>
    </location>
</feature>
<feature type="modified residue" description="Phosphothreonine" evidence="38 42 47 49">
    <location>
        <position position="1569"/>
    </location>
</feature>
<feature type="modified residue" description="Phosphoserine" evidence="42 47 49">
    <location>
        <position position="1571"/>
    </location>
</feature>
<feature type="modified residue" description="Phosphoserine" evidence="1">
    <location>
        <position position="1617"/>
    </location>
</feature>
<feature type="modified residue" description="N6-acetyllysine" evidence="45">
    <location>
        <position position="1639"/>
    </location>
</feature>
<feature type="modified residue" description="Phosphoserine" evidence="40 42 43 47">
    <location>
        <position position="1679"/>
    </location>
</feature>
<feature type="modified residue" description="Phosphoserine" evidence="42">
    <location>
        <position position="1689"/>
    </location>
</feature>
<feature type="modified residue" description="Phosphothreonine" evidence="42">
    <location>
        <position position="1719"/>
    </location>
</feature>
<feature type="modified residue" description="Phosphoserine" evidence="42">
    <location>
        <position position="1721"/>
    </location>
</feature>
<feature type="modified residue" description="Phosphoserine" evidence="42">
    <location>
        <position position="1740"/>
    </location>
</feature>
<feature type="modified residue" description="Phosphothreonine" evidence="42 47">
    <location>
        <position position="1747"/>
    </location>
</feature>
<feature type="modified residue" description="Phosphothreonine" evidence="40 46 49">
    <location>
        <position position="1764"/>
    </location>
</feature>
<feature type="modified residue" description="Phosphothreonine" evidence="42 49">
    <location>
        <position position="1784"/>
    </location>
</feature>
<feature type="modified residue" description="Phosphothreonine" evidence="38 42 47 49">
    <location>
        <position position="1801"/>
    </location>
</feature>
<feature type="modified residue" description="Phosphoserine" evidence="47 49">
    <location>
        <position position="1815"/>
    </location>
</feature>
<feature type="modified residue" description="Phosphothreonine" evidence="42 49">
    <location>
        <position position="1841"/>
    </location>
</feature>
<feature type="modified residue" description="Phosphoserine" evidence="41 42 47 48 49">
    <location>
        <position position="1861"/>
    </location>
</feature>
<feature type="modified residue" description="Phosphoserine" evidence="42">
    <location>
        <position position="1864"/>
    </location>
</feature>
<feature type="modified residue" description="Phosphothreonine" evidence="42">
    <location>
        <position position="1869"/>
    </location>
</feature>
<feature type="modified residue" description="Phosphothreonine" evidence="47">
    <location>
        <position position="1897"/>
    </location>
</feature>
<feature type="modified residue" description="Phosphothreonine" evidence="1">
    <location>
        <position position="1906"/>
    </location>
</feature>
<feature type="modified residue" description="Phosphothreonine" evidence="38 42 47 49">
    <location>
        <position position="1923"/>
    </location>
</feature>
<feature type="modified residue" description="Phosphoserine" evidence="46 47 49">
    <location>
        <position position="1937"/>
    </location>
</feature>
<feature type="modified residue" description="Phosphothreonine" evidence="47 49">
    <location>
        <position position="1963"/>
    </location>
</feature>
<feature type="modified residue" description="Phosphoserine" evidence="47 48">
    <location>
        <position position="1983"/>
    </location>
</feature>
<feature type="modified residue" description="N6-acetyllysine" evidence="45">
    <location>
        <position position="2005"/>
    </location>
</feature>
<feature type="modified residue" description="Phosphothreonine" evidence="1">
    <location>
        <position position="2028"/>
    </location>
</feature>
<feature type="modified residue" description="Phosphothreonine" evidence="42 47 49">
    <location>
        <position position="2065"/>
    </location>
</feature>
<feature type="modified residue" description="Phosphoserine" evidence="42 47 48 49">
    <location>
        <position position="2072"/>
    </location>
</feature>
<feature type="modified residue" description="Phosphothreonine" evidence="42 47 49">
    <location>
        <position position="2085"/>
    </location>
</feature>
<feature type="modified residue" description="Phosphoserine" evidence="42 47 48 49">
    <location>
        <position position="2105"/>
    </location>
</feature>
<feature type="modified residue" description="Phosphothreonine" evidence="42">
    <location>
        <position position="2113"/>
    </location>
</feature>
<feature type="modified residue" description="Phosphoserine" evidence="1">
    <location>
        <position position="2116"/>
    </location>
</feature>
<feature type="modified residue" description="Phosphoserine" evidence="47 49">
    <location>
        <position position="2135"/>
    </location>
</feature>
<feature type="modified residue" description="Phosphothreonine" evidence="1">
    <location>
        <position position="2146"/>
    </location>
</feature>
<feature type="modified residue" description="Phosphothreonine" evidence="1">
    <location>
        <position position="2163"/>
    </location>
</feature>
<feature type="modified residue" description="Phosphothreonine" evidence="42">
    <location>
        <position position="2203"/>
    </location>
</feature>
<feature type="modified residue" description="Phosphoserine" evidence="42 47 49">
    <location>
        <position position="2223"/>
    </location>
</feature>
<feature type="modified residue" description="Phosphothreonine" evidence="42 47 49">
    <location>
        <position position="2231"/>
    </location>
</feature>
<feature type="modified residue" description="Phosphothreonine" evidence="47">
    <location>
        <position position="2233"/>
    </location>
</feature>
<feature type="modified residue" description="Phosphoserine" evidence="42 47">
    <location>
        <position position="2239"/>
    </location>
</feature>
<feature type="modified residue" description="Phosphothreonine" evidence="1">
    <location>
        <position position="2259"/>
    </location>
</feature>
<feature type="modified residue" description="Phosphoserine" evidence="1">
    <location>
        <position position="2261"/>
    </location>
</feature>
<feature type="modified residue" description="Phosphothreonine" evidence="47">
    <location>
        <position position="2268"/>
    </location>
</feature>
<feature type="modified residue" description="Phosphothreonine" evidence="42 47">
    <location>
        <position position="2285"/>
    </location>
</feature>
<feature type="modified residue" description="Phosphothreonine" evidence="42 47 49">
    <location>
        <position position="2325"/>
    </location>
</feature>
<feature type="modified residue" description="Phosphothreonine" evidence="42">
    <location>
        <position position="2328"/>
    </location>
</feature>
<feature type="modified residue" description="Phosphothreonine" evidence="42">
    <location>
        <position position="2333"/>
    </location>
</feature>
<feature type="modified residue" description="Phosphoserine" evidence="42 47 48 49">
    <location>
        <position position="2344"/>
    </location>
</feature>
<feature type="modified residue" description="Phosphothreonine" evidence="42">
    <location>
        <position position="2352"/>
    </location>
</feature>
<feature type="modified residue" description="Phosphothreonine" evidence="42 47 49">
    <location>
        <position position="2389"/>
    </location>
</feature>
<feature type="modified residue" description="Phosphoserine" evidence="42 47">
    <location>
        <position position="2395"/>
    </location>
</feature>
<feature type="modified residue" description="Phosphothreonine" evidence="38 39 42 46 47 49">
    <location>
        <position position="2406"/>
    </location>
</feature>
<feature type="modified residue" description="Phosphoserine" evidence="46 47 49">
    <location>
        <position position="2420"/>
    </location>
</feature>
<feature type="modified residue" description="Phosphothreonine" evidence="49">
    <location>
        <position position="2426"/>
    </location>
</feature>
<feature type="modified residue" description="Phosphothreonine" evidence="47 49">
    <location>
        <position position="2446"/>
    </location>
</feature>
<feature type="modified residue" description="Phosphoserine" evidence="49">
    <location>
        <position position="2466"/>
    </location>
</feature>
<feature type="modified residue" description="Phosphoserine" evidence="49">
    <location>
        <position position="2505"/>
    </location>
</feature>
<feature type="modified residue" description="Phosphoserine" evidence="42 47 48 49">
    <location>
        <position position="2528"/>
    </location>
</feature>
<feature type="modified residue" description="Phosphoserine" evidence="42 47 48 49">
    <location>
        <position position="2588"/>
    </location>
</feature>
<feature type="modified residue" description="Phosphoserine" evidence="49">
    <location>
        <position position="2638"/>
    </location>
</feature>
<feature type="modified residue" description="Phosphoserine" evidence="39 42 47 48">
    <location>
        <position position="2708"/>
    </location>
</feature>
<feature type="modified residue" description="Phosphoserine" evidence="42">
    <location>
        <position position="2827"/>
    </location>
</feature>
<feature type="modified residue" description="Phosphoserine" evidence="42">
    <location>
        <position position="2828"/>
    </location>
</feature>
<feature type="modified residue" description="Phosphoserine" evidence="1">
    <location>
        <position position="2838"/>
    </location>
</feature>
<feature type="modified residue" description="N6-acetyllysine" evidence="1">
    <location>
        <position position="2986"/>
    </location>
</feature>
<feature type="modified residue" description="Phosphoserine" evidence="42 49">
    <location>
        <position position="3041"/>
    </location>
</feature>
<feature type="modified residue" description="Phosphoserine" evidence="47">
    <location>
        <position position="3128"/>
    </location>
</feature>
<feature type="cross-link" description="Glycyl lysine isopeptide (Lys-Gly) (interchain with G-Cter in SUMO2)" evidence="54">
    <location>
        <position position="245"/>
    </location>
</feature>
<feature type="cross-link" description="Glycyl lysine isopeptide (Lys-Gly) (interchain with G-Cter in SUMO2)" evidence="54">
    <location>
        <position position="1022"/>
    </location>
</feature>
<feature type="cross-link" description="Glycyl lysine isopeptide (Lys-Gly) (interchain with G-Cter in SUMO2)" evidence="51 52 53 54">
    <location>
        <position position="1035"/>
    </location>
</feature>
<feature type="cross-link" description="Glycyl lysine isopeptide (Lys-Gly) (interchain with G-Cter in SUMO1); alternate" evidence="50">
    <location>
        <position position="1093"/>
    </location>
</feature>
<feature type="cross-link" description="Glycyl lysine isopeptide (Lys-Gly) (interchain with G-Cter in SUMO2); alternate" evidence="54">
    <location>
        <position position="1093"/>
    </location>
</feature>
<feature type="cross-link" description="Glycyl lysine isopeptide (Lys-Gly) (interchain with G-Cter in SUMO2)" evidence="54">
    <location>
        <position position="1185"/>
    </location>
</feature>
<feature type="cross-link" description="Glycyl lysine isopeptide (Lys-Gly) (interchain with G-Cter in SUMO2)" evidence="54">
    <location>
        <position position="1188"/>
    </location>
</feature>
<feature type="cross-link" description="Glycyl lysine isopeptide (Lys-Gly) (interchain with G-Cter in SUMO2)" evidence="54">
    <location>
        <position position="1337"/>
    </location>
</feature>
<feature type="cross-link" description="Glycyl lysine isopeptide (Lys-Gly) (interchain with G-Cter in SUMO2)" evidence="51 52 53 54">
    <location>
        <position position="1643"/>
    </location>
</feature>
<feature type="cross-link" description="Glycyl lysine isopeptide (Lys-Gly) (interchain with G-Cter in SUMO2)" evidence="54">
    <location>
        <position position="1703"/>
    </location>
</feature>
<feature type="cross-link" description="Glycyl lysine isopeptide (Lys-Gly) (interchain with G-Cter in SUMO1); alternate" evidence="50">
    <location>
        <position position="2009"/>
    </location>
</feature>
<feature type="cross-link" description="Glycyl lysine isopeptide (Lys-Gly) (interchain with G-Cter in SUMO2); alternate" evidence="53 54">
    <location>
        <position position="2009"/>
    </location>
</feature>
<feature type="cross-link" description="Glycyl lysine isopeptide (Lys-Gly) (interchain with G-Cter in SUMO1); alternate" evidence="50">
    <location>
        <position position="2067"/>
    </location>
</feature>
<feature type="cross-link" description="Glycyl lysine isopeptide (Lys-Gly) (interchain with G-Cter in SUMO2); alternate" evidence="54">
    <location>
        <position position="2067"/>
    </location>
</feature>
<feature type="cross-link" description="Glycyl lysine isopeptide (Lys-Gly) (interchain with G-Cter in SUMO1)" evidence="50">
    <location>
        <position position="2492"/>
    </location>
</feature>
<feature type="cross-link" description="Glycyl lysine isopeptide (Lys-Gly) (interchain with G-Cter in SUMO1); alternate" evidence="50">
    <location>
        <position position="2613"/>
    </location>
</feature>
<feature type="cross-link" description="Glycyl lysine isopeptide (Lys-Gly) (interchain with G-Cter in SUMO2); alternate" evidence="51 54">
    <location>
        <position position="2613"/>
    </location>
</feature>
<feature type="cross-link" description="Glycyl lysine isopeptide (Lys-Gly) (interchain with G-Cter in SUMO1); alternate" evidence="50">
    <location>
        <position position="2734"/>
    </location>
</feature>
<feature type="cross-link" description="Glycyl lysine isopeptide (Lys-Gly) (interchain with G-Cter in SUMO2); alternate" evidence="50 51 53 54">
    <location>
        <position position="2734"/>
    </location>
</feature>
<feature type="cross-link" description="Glycyl lysine isopeptide (Lys-Gly) (interchain with G-Cter in SUMO1); alternate" evidence="50">
    <location>
        <position position="2852"/>
    </location>
</feature>
<feature type="cross-link" description="Glycyl lysine isopeptide (Lys-Gly) (interchain with G-Cter in SUMO2); alternate" evidence="51 54">
    <location>
        <position position="2852"/>
    </location>
</feature>
<feature type="cross-link" description="Glycyl lysine isopeptide (Lys-Gly) (interchain with G-Cter in SUMO2)" evidence="54">
    <location>
        <position position="2967"/>
    </location>
</feature>
<feature type="splice variant" id="VSP_004298" description="In isoform Short." evidence="32">
    <location>
        <begin position="136"/>
        <end position="495"/>
    </location>
</feature>
<feature type="sequence variant" id="VAR_029055" description="In dbSNP:rs2071498.">
    <original>N</original>
    <variation>S</variation>
    <location>
        <position position="104"/>
    </location>
</feature>
<feature type="sequence variant" id="VAR_029056" description="In dbSNP:rs7095325.">
    <original>W</original>
    <variation>R</variation>
    <location>
        <position position="238"/>
    </location>
</feature>
<feature type="sequence variant" id="VAR_029057" description="In dbSNP:rs11016076.">
    <original>E</original>
    <variation>D</variation>
    <location>
        <position position="497"/>
    </location>
</feature>
<feature type="sequence variant" id="VAR_029058" description="In dbSNP:rs4471342.">
    <original>Q</original>
    <variation>P</variation>
    <location>
        <position position="574"/>
    </location>
</feature>
<feature type="sequence variant" id="VAR_024161" description="In dbSNP:rs997983.">
    <original>I</original>
    <variation>L</variation>
    <location>
        <position position="631"/>
    </location>
</feature>
<feature type="sequence variant" id="VAR_033995" description="In dbSNP:rs34916904.">
    <original>R</original>
    <variation>W</variation>
    <location>
        <position position="832"/>
    </location>
</feature>
<feature type="sequence variant" id="VAR_024162" description="In dbSNP:rs2240.">
    <original>L</original>
    <variation>V</variation>
    <location>
        <position position="854"/>
    </location>
</feature>
<feature type="sequence variant" id="VAR_029059" description="In dbSNP:rs2853344." evidence="27">
    <original>A</original>
    <variation>V</variation>
    <location>
        <position position="872"/>
    </location>
</feature>
<feature type="sequence variant" id="VAR_024163" description="In dbSNP:rs2152143.">
    <original>G</original>
    <variation>S</variation>
    <location>
        <position position="1042"/>
    </location>
</feature>
<feature type="sequence variant" id="VAR_029060" description="In dbSNP:rs11016074.">
    <original>T</original>
    <variation>S</variation>
    <location>
        <position position="1120"/>
    </location>
</feature>
<feature type="sequence variant" id="VAR_021838" description="In dbSNP:rs4750685.">
    <original>T</original>
    <variation>I</variation>
    <location>
        <position position="1247"/>
    </location>
</feature>
<feature type="sequence variant" id="VAR_020047" description="In dbSNP:rs3740423.">
    <original>E</original>
    <variation>V</variation>
    <location>
        <position position="1403"/>
    </location>
</feature>
<feature type="sequence variant" id="VAR_029061" description="In dbSNP:rs2853345." evidence="27">
    <original>L</original>
    <variation>W</variation>
    <location>
        <position position="1470"/>
    </location>
</feature>
<feature type="sequence variant" id="VAR_029062" description="In dbSNP:rs7918199.">
    <original>V</original>
    <variation>M</variation>
    <location>
        <position position="1559"/>
    </location>
</feature>
<feature type="sequence variant" id="VAR_029063" description="In dbSNP:rs2782871." evidence="27">
    <original>P</original>
    <variation>L</variation>
    <location>
        <position position="1622"/>
    </location>
</feature>
<feature type="sequence variant" id="VAR_029064" description="In dbSNP:rs2782872." evidence="27">
    <original>T</original>
    <variation>A</variation>
    <location>
        <position position="1849"/>
    </location>
</feature>
<feature type="sequence variant" id="VAR_029065" description="In dbSNP:rs11591817.">
    <original>R</original>
    <variation>Q</variation>
    <location>
        <position position="1876"/>
    </location>
</feature>
<feature type="sequence variant" id="VAR_033996" description="In dbSNP:rs34116632.">
    <original>L</original>
    <variation>I</variation>
    <location>
        <position position="1951"/>
    </location>
</feature>
<feature type="sequence variant" id="VAR_029066" description="In dbSNP:rs11016073.">
    <original>I</original>
    <variation>T</variation>
    <location>
        <position position="2101"/>
    </location>
</feature>
<feature type="sequence variant" id="VAR_024164" description="In dbSNP:rs7083622.">
    <original>T</original>
    <variation>N</variation>
    <location>
        <position position="2337"/>
    </location>
</feature>
<feature type="sequence variant" id="VAR_029067" description="In dbSNP:rs7071768.">
    <original>N</original>
    <variation>S</variation>
    <location>
        <position position="2363"/>
    </location>
</feature>
<feature type="sequence variant" id="VAR_061671" description="In dbSNP:rs34688192.">
    <original>R</original>
    <variation>H</variation>
    <location>
        <position position="2607"/>
    </location>
</feature>
<feature type="sequence variant" id="VAR_024165" description="In dbSNP:rs1063535.">
    <original>P</original>
    <variation>L</variation>
    <location>
        <position position="2608"/>
    </location>
</feature>
<feature type="sequence variant" id="VAR_029068" description="In dbSNP:rs12777740.">
    <original>R</original>
    <variation>H</variation>
    <location>
        <position position="2649"/>
    </location>
</feature>
<feature type="sequence variant" id="VAR_024166" description="In dbSNP:rs1050767.">
    <original>T</original>
    <variation>P</variation>
    <location>
        <position position="2720"/>
    </location>
</feature>
<feature type="sequence variant" id="VAR_029069" description="In dbSNP:rs10082391.">
    <original>D</original>
    <variation>G</variation>
    <location>
        <position position="2760"/>
    </location>
</feature>
<feature type="sequence variant" id="VAR_029070" description="In dbSNP:rs10764749.">
    <original>R</original>
    <variation>Q</variation>
    <location>
        <position position="2786"/>
    </location>
</feature>
<feature type="sequence variant" id="VAR_029071" description="In dbSNP:rs10082533.">
    <original>S</original>
    <variation>N</variation>
    <location>
        <position position="2793"/>
    </location>
</feature>
<feature type="sequence variant" id="VAR_029072" description="In dbSNP:rs11016072.">
    <original>R</original>
    <variation>H</variation>
    <location>
        <position position="2845"/>
    </location>
</feature>
<feature type="sequence variant" id="VAR_024167" description="In dbSNP:rs2071496.">
    <original>T</original>
    <variation>S</variation>
    <location>
        <position position="2868"/>
    </location>
</feature>
<feature type="sequence variant" id="VAR_029073" description="In dbSNP:rs11016071.">
    <original>Q</original>
    <variation>R</variation>
    <location>
        <position position="2904"/>
    </location>
</feature>
<feature type="sequence variant" id="VAR_029074" description="In dbSNP:rs2798669." evidence="27">
    <original>N</original>
    <variation>D</variation>
    <location>
        <position position="3097"/>
    </location>
</feature>
<feature type="sequence variant" id="VAR_033997" description="In dbSNP:rs34750407.">
    <original>E</original>
    <variation>G</variation>
    <location>
        <position position="3102"/>
    </location>
</feature>
<feature type="sequence variant" id="VAR_014858" description="In dbSNP:rs11106.">
    <original>T</original>
    <variation>S</variation>
    <location>
        <position position="3150"/>
    </location>
</feature>
<feature type="sequence variant" id="VAR_014859" description="In dbSNP:rs8473.">
    <original>K</original>
    <variation>E</variation>
    <location>
        <position position="3217"/>
    </location>
</feature>
<feature type="mutagenesis site" description="Abolished ability to undergo liquid-liquid phase separation." evidence="24">
    <original>KRRRVSFGGHLRPELFDENLPPNTPLKRGEAPTKRKSLVMHTPPVLKKIIKEQPQPSGKQESGSEIHVEVKAQSLVISPPAPSPRKTPVASDQRRRSCKTAPASSSKSQTEVPKRGGRKSGNLPSKRVSISRSQHDILQMICSKRRSGASEANLIVAKSWADVVKLGAKQTQTKVIK</original>
    <variation>AAAAVSFGGHLAPELFDENLPPNTPLAAGEAPTAAASLVMHTPPVLAAIIAEQPQPSGAQESGSEIHVEVAAQSLVISPPAPSPAATPVASDQAAASCATAPASSSASQTEVPAAGGAASGNLPSAAVSISASQHDILQMICSAAASGASEANLIVAASWADVVALGAAQTQTAVIA</variation>
    <location>
        <begin position="502"/>
        <end position="678"/>
    </location>
</feature>
<feature type="mutagenesis site" description="Abolihed binding with PPP1CC; induces a slight delay in MKI67 enrichment on chromosomes." evidence="17 24">
    <original>VSF</original>
    <variation>ASA</variation>
    <location>
        <begin position="506"/>
        <end position="508"/>
    </location>
</feature>
<feature type="sequence conflict" description="In Ref. 1; CAA46519/CAA46520." evidence="33" ref="1">
    <original>RKSGNLPS</original>
    <variation>ERVATCLQ</variation>
    <location>
        <begin position="619"/>
        <end position="626"/>
    </location>
</feature>
<feature type="sequence conflict" description="In Ref. 1; CAA46519/CAA46520." evidence="33" ref="1">
    <original>I</original>
    <variation>V</variation>
    <location>
        <position position="2205"/>
    </location>
</feature>
<feature type="sequence conflict" description="In Ref. 1; CAA46519/CAA46520." evidence="33" ref="1">
    <original>KL</original>
    <variation>NV</variation>
    <location>
        <begin position="2892"/>
        <end position="2893"/>
    </location>
</feature>
<feature type="sequence conflict" description="In Ref. 1; CAA46519/CAA46520." evidence="33" ref="1">
    <original>R</original>
    <variation>T</variation>
    <location>
        <position position="3246"/>
    </location>
</feature>
<feature type="strand" evidence="55">
    <location>
        <begin position="5"/>
        <end position="12"/>
    </location>
</feature>
<feature type="strand" evidence="55">
    <location>
        <begin position="15"/>
        <end position="21"/>
    </location>
</feature>
<feature type="strand" evidence="55">
    <location>
        <begin position="24"/>
        <end position="32"/>
    </location>
</feature>
<feature type="strand" evidence="55">
    <location>
        <begin position="35"/>
        <end position="38"/>
    </location>
</feature>
<feature type="strand" evidence="55">
    <location>
        <begin position="49"/>
        <end position="53"/>
    </location>
</feature>
<feature type="strand" evidence="55">
    <location>
        <begin position="58"/>
        <end position="60"/>
    </location>
</feature>
<feature type="strand" evidence="55">
    <location>
        <begin position="65"/>
        <end position="67"/>
    </location>
</feature>
<feature type="strand" evidence="56">
    <location>
        <begin position="80"/>
        <end position="82"/>
    </location>
</feature>
<feature type="strand" evidence="55">
    <location>
        <begin position="86"/>
        <end position="89"/>
    </location>
</feature>
<feature type="strand" evidence="55">
    <location>
        <begin position="94"/>
        <end position="99"/>
    </location>
</feature>
<feature type="strand" evidence="57">
    <location>
        <begin position="515"/>
        <end position="517"/>
    </location>
</feature>
<sequence>MWPTRRLVTIKRSGVDGPHFPLSLSTCLFGRGIECDIRIQLPVVSKQHCKIEIHEQEAILHNFSSTNPTQVNGSVIDEPVRLKHGDVITIIDRSFRYENESLQNGRKSTEFPRKIREQEPARRVSRSSFSSDPDEKAQDSKAYSKITEGKVSGNPQVHIKNVKEDSTADDSKDSVAQGTTNVHSSEHAGRNGRNAADPISGDFKEISSVKLVSRYGELKSVPTTQCLDNSKKNESPFWKLYESVKKELDVKSQKENVLQYCRKSGLQTDYATEKESADGLQGETQLLVSRKSRPKSGGSGHAVAEPASPEQELDQNKGKGRDVESVQTPSKAVGASFPLYEPAKMKTPVQYSQQQNSPQKHKNKDLYTTGRRESVNLGKSEGFKAGDKTLTPRKLSTRNRTPAKVEDAADSATKPENLSSKTRGSIPTDVEVLPTETEIHNEPFLTLWLTQVERKIQKDSLSKPEKLGTTAGQMCSGLPGLSSVDINNFGDSINESEGIPLKRRRVSFGGHLRPELFDENLPPNTPLKRGEAPTKRKSLVMHTPPVLKKIIKEQPQPSGKQESGSEIHVEVKAQSLVISPPAPSPRKTPVASDQRRRSCKTAPASSSKSQTEVPKRGGRKSGNLPSKRVSISRSQHDILQMICSKRRSGASEANLIVAKSWADVVKLGAKQTQTKVIKHGPQRSMNKRQRRPATPKKPVGEVHSQFSTGHANSPCTIIIGKAHTEKVHVPARPYRVLNNFISNQKMDFKEDLSGIAEMFKTPVKEQPQLTSTCHIAISNSENLLGKQFQGTDSGEEPLLPTSESFGGNVFFSAQNAAKQPSDKCSASPPLRRQCIRENGNVAKTPRNTYKMTSLETKTSDTETEPSKTVSTANRSGRSTEFRNIQKLPVESKSEETNTEIVECILKRGQKATLLQQRREGEMKEIERPFETYKENIELKENDEKMKAMKRSRTWGQKCAPMSDLTDLKSLPDTELMKDTARGQNLLQTQDHAKAPKSEKGKITKMPCQSLQPEPINTPTHTKQQLKASLGKVGVKEELLAVGKFTRTSGETTHTHREPAGDGKSIRTFKESPKQILDPAARVTGMKKWPRTPKEEAQSLEDLAGFKELFQTPGPSEESMTDEKTTKIACKSPPPESVDTPTSTKQWPKRSLRKADVEEEFLALRKLTPSAGKAMLTPKPAGGDEKDIKAFMGTPVQKLDLAGTLPGSKRQLQTPKEKAQALEDLAGFKELFQTPGHTEELVAAGKTTKIPCDSPQSDPVDTPTSTKQRPKRSIRKADVEGELLACRNLMPSAGKAMHTPKPSVGEEKDIIIFVGTPVQKLDLTENLTGSKRRPQTPKEEAQALEDLTGFKELFQTPGHTEEAVAAGKTTKMPCESSPPESADTPTSTRRQPKTPLEKRDVQKELSALKKLTQTSGETTHTDKVPGGEDKSINAFRETAKQKLDPAASVTGSKRHPKTKEKAQPLEDLAGLKELFQTPVCTDKPTTHEKTTKIACRSQPDPVDTPTSSKPQSKRSLRKVDVEEEFFALRKRTPSAGKAMHTPKPAVSGEKNIYAFMGTPVQKLDLTENLTGSKRRLQTPKEKAQALEDLAGFKELFQTRGHTEESMTNDKTAKVACKSSQPDPDKNPASSKRRLKTSLGKVGVKEELLAVGKLTQTSGETTHTHTEPTGDGKSMKAFMESPKQILDSAASLTGSKRQLRTPKGKSEVPEDLAGFIELFQTPSHTKESMTNEKTTKVSYRASQPDLVDTPTSSKPQPKRSLRKADTEEEFLAFRKQTPSAGKAMHTPKPAVGEEKDINTFLGTPVQKLDQPGNLPGSNRRLQTRKEKAQALEELTGFRELFQTPCTDNPTTDEKTTKKILCKSPQSDPADTPTNTKQRPKRSLKKADVEEEFLAFRKLTPSAGKAMHTPKAAVGEEKDINTFVGTPVEKLDLLGNLPGSKRRPQTPKEKAKALEDLAGFKELFQTPGHTEESMTDDKITEVSCKSPQPDPVKTPTSSKQRLKISLGKVGVKEEVLPVGKLTQTSGKTTQTHRETAGDGKSIKAFKESAKQMLDPANYGTGMERWPRTPKEEAQSLEDLAGFKELFQTPDHTEESTTDDKTTKIACKSPPPESMDTPTSTRRRPKTPLGKRDIVEELSALKQLTQTTHTDKVPGDEDKGINVFRETAKQKLDPAASVTGSKRQPRTPKGKAQPLEDLAGLKELFQTPICTDKPTTHEKTTKIACRSPQPDPVGTPTIFKPQSKRSLRKADVEEESLALRKRTPSVGKAMDTPKPAGGDEKDMKAFMGTPVQKLDLPGNLPGSKRWPQTPKEKAQALEDLAGFKELFQTPGTDKPTTDEKTTKIACKSPQPDPVDTPASTKQRPKRNLRKADVEEEFLALRKRTPSAGKAMDTPKPAVSDEKNINTFVETPVQKLDLLGNLPGSKRQPQTPKEKAEALEDLVGFKELFQTPGHTEESMTDDKITEVSCKSPQPESFKTSRSSKQRLKIPLVKVDMKEEPLAVSKLTRTSGETTQTHTEPTGDSKSIKAFKESPKQILDPAASVTGSRRQLRTRKEKARALEDLVDFKELFSAPGHTEESMTIDKNTKIPCKSPPPELTDTATSTKRCPKTRPRKEVKEELSAVERLTQTSGQSTHTHKEPASGDEGIKVLKQRAKKKPNPVEEEPSRRRPRAPKEKAQPLEDLAGFTELSETSGHTQESLTAGKATKIPCESPPLEVVDTTASTKRHLRTRVQKVQVKEEPSAVKFTQTSGETTDADKEPAGEDKGIKALKESAKQTPAPAASVTGSRRRPRAPRESAQAIEDLAGFKDPAAGHTEESMTDDKTTKIPCKSSPELEDTATSSKRRPRTRAQKVEVKEELLAVGKLTQTSGETTHTDKEPVGEGKGTKAFKQPAKRKLDAEDVIGSRRQPRAPKEKAQPLEDLASFQELSQTPGHTEELANGAADSFTSAPKQTPDSGKPLKISRRVLRAPKVEPVGDVVSTRDPVKSQSKSNTSLPPLPFKRGGGKDGSVTGTKRLRCMPAPEEIVEELPASKKQRVAPRARGKSSEPVVIMKRSLRTSAKRIEPAEELNSNDMKTNKEEHKLQDSVPENKGISLRSRRQNKTEAEQQITEVFVLAERIEINRNEKKPMKTSPEMDIQNPDDGARKPIPRDKVTENKRCLRSARQNESSQPKVAEESGGQKSAKVLMQNQKGKGEAGNSDSMCLRSRKTKSQPAASTLESKSVQRVTRSVKRCAENPKKAEDNVCVKKIRTRSHRDSEDI</sequence>
<comment type="function">
    <text evidence="1 8 16 19 20 21 23 24">Protein that associates with the surface of mitotic chromosomes and acts both as a chromosome repellent during early mitosis and chromosome attractant during late mitosis (PubMed:27362226, PubMed:32879492, PubMed:35513709, PubMed:39153474). Required to maintain individual mitotic chromosomes dispersed in the cytoplasm following nuclear envelope disassembly (PubMed:27362226). During early mitosis, relocalizes from nucleoli to the chromosome surface where it forms extended brush structures that cover a substantial fraction of the chromosome surface (PubMed:27362226). The MKI67 brush structure prevents chromosomes from collapsing into a single chromatin mass by forming a steric and electrostatic charge barrier: the protein has a high net electrical charge and acts as a surfactant, dispersing chromosomes and enabling independent chromosome motility (PubMed:27362226). During mitotic anaphase, the MKI67 brush structure collapses and MKI67 switches from a chromosome repellent to a chromosome attractant to promote chromosome clustering and facilitate the exclusion of large cytoplasmic particles from the future nuclear space (PubMed:32879492, PubMed:39153474). Mechanistically, dephosphorylation during mitotic exit and simultaneous exposure of a conserved basic patch induce the RNA-dependent formation of a liquid-like condensed phase on the chromosome surface, promoting coalescence of neighboring chromosome surfaces and clustering of chromosomes (PubMed:39153474). Binds premature ribosomal RNAs during anaphase; promoting liquid-liquid phase separation (PubMed:28935370, PubMed:39153474). Binds DNA, with a preference for supercoiled DNA and AT-rich DNA (PubMed:10878551). Does not contribute to the internal structure of mitotic chromosomes (By similarity). May play a role in chromatin organization; it is however unclear whether it plays a direct role in chromatin organization or whether it is an indirect consequence of its function in mitotic chromosome (PubMed:24867636).</text>
</comment>
<comment type="subunit">
    <text evidence="7 9 10 12 13 15 16 17">Interacts with KIF15 (PubMed:10878014). Interacts (via the FHA domain) with NIFK (PubMed:11342549, PubMed:14659764, PubMed:16244663). Interacts with PPP1CC (PubMed:24867636, PubMed:25012651). Component of a complex at least composed of ZNF335, HCFC1, CCAR2, EMSY, MKI67, RBBP5, ASH2L and WDR5; the complex is formed as a result of interactions between components of a nuclear receptor-mediated transcription complex and a histone methylation complex (PubMed:19131338). Interacts with ZNF335 (PubMed:19131338, PubMed:23178126).</text>
</comment>
<comment type="interaction">
    <interactant intactId="EBI-876367">
        <id>P46013</id>
    </interactant>
    <interactant intactId="EBI-712159">
        <id>Q9NS87</id>
        <label>KIF15</label>
    </interactant>
    <organismsDiffer>false</organismsDiffer>
    <experiments>3</experiments>
</comment>
<comment type="interaction">
    <interactant intactId="EBI-876367">
        <id>P46013</id>
    </interactant>
    <interactant intactId="EBI-2561019">
        <id>Q9BYG3</id>
        <label>NIFK</label>
    </interactant>
    <organismsDiffer>false</organismsDiffer>
    <experiments>3</experiments>
</comment>
<comment type="subcellular location">
    <subcellularLocation>
        <location evidence="11 14 19 21 23 24 29">Chromosome</location>
    </subcellularLocation>
    <subcellularLocation>
        <location evidence="8 14">Nucleus</location>
    </subcellularLocation>
    <subcellularLocation>
        <location evidence="8 14 18 28">Nucleus</location>
        <location evidence="8 14 18 28">Nucleolus</location>
    </subcellularLocation>
    <text evidence="11 14 19">During early mitosis, relocalizes from nucleoli to the surface of the mitotic chromosome, the perichromosomal layer, and covers a substantial fraction of the mitotic chromosome surface (PubMed:27362226). Associates with satellite DNA in G1 phase (PubMed:9510506). Binds tightly to chromatin in interphase, chromatin-binding decreases in mitosis when it associates with the surface of the condensed chromosomes (PubMed:15896774, PubMed:22002106). Predominantly localized in the G1 phase in the perinucleolar region, in the later phases it is also detected throughout the nuclear interior, being predominantly localized in the nuclear matrix (PubMed:22002106).</text>
</comment>
<comment type="alternative products">
    <event type="alternative splicing"/>
    <isoform>
        <id>P46013-1</id>
        <name>Long</name>
        <sequence type="displayed"/>
    </isoform>
    <isoform>
        <id>P46013-2</id>
        <name>Short</name>
        <sequence type="described" ref="VSP_004298"/>
    </isoform>
</comment>
<comment type="developmental stage">
    <text evidence="18 25 28">Expression occurs preferentially during late G1, S, G2 and M phases of the cell cycle, while in cells in G0 phase the antigen cannot be detected (at protein level) (PubMed:6206131). Present at highest level in G2 phase and during mitosis (at protein level). In interphase, forms fiber-like structures in fibrillarin-deficient regions surrounding nucleoli (PubMed:2674163, PubMed:8799815).</text>
</comment>
<comment type="domain">
    <text evidence="24">The positively charged patch (CP) region mediates liquid-liquid phase separation.</text>
</comment>
<comment type="PTM">
    <text evidence="1 5 6 17 24">Hyperphosphorylated by CDK1 in mitosis; hyperphosphorylatiom prevents undergoing liquid-liquid phase separation (PubMed:10502411, PubMed:10653604, PubMed:25012651, PubMed:39153474). Dephosphorylated by PPP1CC at the onset of anaphase (PubMed:25012651). Dephosphorylated by protein phosphatase 2A (PP2A) at the onset of anaphase (By similarity). Dephosphorylation by protein phosphatase 2A (PP2A) and simultaneous exposure of the positively charged patch (CP) during mitotic exit induce the RNA-dependent formation of a liquid-like condensed phase on the chromosome surface (PubMed:39153474).</text>
</comment>
<comment type="PTM">
    <text evidence="22">Ubiquitinated by the APC/C complex after neuronal progenitors exit mitosis during brain development, leading to clearance from constitutive heterochromatin.</text>
</comment>
<comment type="biotechnology">
    <text evidence="26 30 31">Widely used as a marker to assess cell proliferation, as it is detected in the nucleus of proliferating cells only (PubMed:21960707, PubMed:6339421). In cancer research field for example, MKI67 is the most widely used marker for comparing proliferation between tumor samples (PubMed:21960707, PubMed:26680267).</text>
</comment>
<comment type="caution">
    <text evidence="19 26 30">Was thought to play a key role in cell proliferation, and is commonly used as a marker of cell proliferation (PubMed:21960707, PubMed:6339421). However, its primary function is uncoupled from cell proliferation: it is required to maintain mitotic chromosomes dispersed by forming a steric and electrostatic charge barrier (PubMed:27362226).</text>
</comment>
<comment type="online information" name="Wikipedia">
    <link uri="https://en.wikipedia.org/wiki/Ki-67_%28Biology%29"/>
    <text>Ki-67 entry</text>
</comment>
<comment type="online information" name="Protein Spotlight">
    <link uri="https://www.proteinspotlight.org/back_issues/186/"/>
    <text>The contours of heredity - Issue 186 of December 2016</text>
</comment>
<gene>
    <name evidence="37" type="primary">MKI67</name>
</gene>
<reference key="1">
    <citation type="journal article" date="1993" name="J. Cell Biol.">
        <title>The cell proliferation-associated antigen of antibody Ki-67: a very large, ubiquitous nuclear protein with numerous repeated elements, representing a new kind of cell cycle-maintaining proteins.</title>
        <authorList>
            <person name="Schlueter C."/>
            <person name="Duchrow M."/>
            <person name="Wohlenberg C."/>
            <person name="Becker M.H.G."/>
            <person name="Key G."/>
            <person name="Flad H.-D."/>
            <person name="Gerdes J."/>
        </authorList>
    </citation>
    <scope>NUCLEOTIDE SEQUENCE [MRNA] (ISOFORMS SHORT AND LONG)</scope>
    <scope>VARIANTS VAL-872; TRP-1470; LEU-1622; ALA-1849 AND ASP-3097</scope>
</reference>
<reference key="2">
    <citation type="journal article" date="2004" name="Nature">
        <title>The DNA sequence and comparative analysis of human chromosome 10.</title>
        <authorList>
            <person name="Deloukas P."/>
            <person name="Earthrowl M.E."/>
            <person name="Grafham D.V."/>
            <person name="Rubenfield M."/>
            <person name="French L."/>
            <person name="Steward C.A."/>
            <person name="Sims S.K."/>
            <person name="Jones M.C."/>
            <person name="Searle S."/>
            <person name="Scott C."/>
            <person name="Howe K."/>
            <person name="Hunt S.E."/>
            <person name="Andrews T.D."/>
            <person name="Gilbert J.G.R."/>
            <person name="Swarbreck D."/>
            <person name="Ashurst J.L."/>
            <person name="Taylor A."/>
            <person name="Battles J."/>
            <person name="Bird C.P."/>
            <person name="Ainscough R."/>
            <person name="Almeida J.P."/>
            <person name="Ashwell R.I.S."/>
            <person name="Ambrose K.D."/>
            <person name="Babbage A.K."/>
            <person name="Bagguley C.L."/>
            <person name="Bailey J."/>
            <person name="Banerjee R."/>
            <person name="Bates K."/>
            <person name="Beasley H."/>
            <person name="Bray-Allen S."/>
            <person name="Brown A.J."/>
            <person name="Brown J.Y."/>
            <person name="Burford D.C."/>
            <person name="Burrill W."/>
            <person name="Burton J."/>
            <person name="Cahill P."/>
            <person name="Camire D."/>
            <person name="Carter N.P."/>
            <person name="Chapman J.C."/>
            <person name="Clark S.Y."/>
            <person name="Clarke G."/>
            <person name="Clee C.M."/>
            <person name="Clegg S."/>
            <person name="Corby N."/>
            <person name="Coulson A."/>
            <person name="Dhami P."/>
            <person name="Dutta I."/>
            <person name="Dunn M."/>
            <person name="Faulkner L."/>
            <person name="Frankish A."/>
            <person name="Frankland J.A."/>
            <person name="Garner P."/>
            <person name="Garnett J."/>
            <person name="Gribble S."/>
            <person name="Griffiths C."/>
            <person name="Grocock R."/>
            <person name="Gustafson E."/>
            <person name="Hammond S."/>
            <person name="Harley J.L."/>
            <person name="Hart E."/>
            <person name="Heath P.D."/>
            <person name="Ho T.P."/>
            <person name="Hopkins B."/>
            <person name="Horne J."/>
            <person name="Howden P.J."/>
            <person name="Huckle E."/>
            <person name="Hynds C."/>
            <person name="Johnson C."/>
            <person name="Johnson D."/>
            <person name="Kana A."/>
            <person name="Kay M."/>
            <person name="Kimberley A.M."/>
            <person name="Kershaw J.K."/>
            <person name="Kokkinaki M."/>
            <person name="Laird G.K."/>
            <person name="Lawlor S."/>
            <person name="Lee H.M."/>
            <person name="Leongamornlert D.A."/>
            <person name="Laird G."/>
            <person name="Lloyd C."/>
            <person name="Lloyd D.M."/>
            <person name="Loveland J."/>
            <person name="Lovell J."/>
            <person name="McLaren S."/>
            <person name="McLay K.E."/>
            <person name="McMurray A."/>
            <person name="Mashreghi-Mohammadi M."/>
            <person name="Matthews L."/>
            <person name="Milne S."/>
            <person name="Nickerson T."/>
            <person name="Nguyen M."/>
            <person name="Overton-Larty E."/>
            <person name="Palmer S.A."/>
            <person name="Pearce A.V."/>
            <person name="Peck A.I."/>
            <person name="Pelan S."/>
            <person name="Phillimore B."/>
            <person name="Porter K."/>
            <person name="Rice C.M."/>
            <person name="Rogosin A."/>
            <person name="Ross M.T."/>
            <person name="Sarafidou T."/>
            <person name="Sehra H.K."/>
            <person name="Shownkeen R."/>
            <person name="Skuce C.D."/>
            <person name="Smith M."/>
            <person name="Standring L."/>
            <person name="Sycamore N."/>
            <person name="Tester J."/>
            <person name="Thorpe A."/>
            <person name="Torcasso W."/>
            <person name="Tracey A."/>
            <person name="Tromans A."/>
            <person name="Tsolas J."/>
            <person name="Wall M."/>
            <person name="Walsh J."/>
            <person name="Wang H."/>
            <person name="Weinstock K."/>
            <person name="West A.P."/>
            <person name="Willey D.L."/>
            <person name="Whitehead S.L."/>
            <person name="Wilming L."/>
            <person name="Wray P.W."/>
            <person name="Young L."/>
            <person name="Chen Y."/>
            <person name="Lovering R.C."/>
            <person name="Moschonas N.K."/>
            <person name="Siebert R."/>
            <person name="Fechtel K."/>
            <person name="Bentley D."/>
            <person name="Durbin R.M."/>
            <person name="Hubbard T."/>
            <person name="Doucette-Stamm L."/>
            <person name="Beck S."/>
            <person name="Smith D.R."/>
            <person name="Rogers J."/>
        </authorList>
    </citation>
    <scope>NUCLEOTIDE SEQUENCE [LARGE SCALE GENOMIC DNA]</scope>
</reference>
<reference key="3">
    <citation type="submission" date="1997-03" db="EMBL/GenBank/DDBJ databases">
        <title>Sequence of the human Ki-67 protein gene 5' and promoter region.</title>
        <authorList>
            <person name="Gerdes J."/>
        </authorList>
    </citation>
    <scope>NUCLEOTIDE SEQUENCE [GENOMIC DNA] OF 1-31</scope>
</reference>
<reference key="4">
    <citation type="journal article" date="1983" name="Int. J. Cancer">
        <title>Production of a mouse monoclonal antibody reactive with a human nuclear antigen associated with cell proliferation.</title>
        <authorList>
            <person name="Gerdes J."/>
            <person name="Schwab U."/>
            <person name="Lemke H."/>
            <person name="Stein H."/>
        </authorList>
    </citation>
    <scope>BIOTECHNOLOGY</scope>
</reference>
<reference key="5">
    <citation type="journal article" date="1984" name="J. Immunol.">
        <title>Cell cycle analysis of a cell proliferation-associated human nuclear antigen defined by the monoclonal antibody Ki-67.</title>
        <authorList>
            <person name="Gerdes J."/>
            <person name="Lemke H."/>
            <person name="Baisch H."/>
            <person name="Wacker H.H."/>
            <person name="Schwab U."/>
            <person name="Stein H."/>
        </authorList>
    </citation>
    <scope>DEVELOPMENTAL STAGE</scope>
</reference>
<reference key="6">
    <citation type="journal article" date="1989" name="J. Cell Sci.">
        <title>Ki-67 detects a nuclear matrix-associated proliferation-related antigen. I. Intracellular localization during interphase.</title>
        <authorList>
            <person name="Verheijen R."/>
            <person name="Kuijpers H.J."/>
            <person name="Schlingemann R.O."/>
            <person name="Boehmer A.L."/>
            <person name="van Driel R."/>
            <person name="Brakenhoff G.J."/>
            <person name="Ramaekers F.C."/>
        </authorList>
    </citation>
    <scope>DEVELOPMENTAL STAGE</scope>
    <scope>SUBCELLULAR LOCATION</scope>
</reference>
<reference key="7">
    <citation type="journal article" date="1996" name="J. Cell Sci.">
        <title>Localisation of the Ki-67 antigen within the nucleolus. Evidence for a fibrillarin-deficient region of the dense fibrillar component.</title>
        <authorList>
            <person name="Kill I.R."/>
        </authorList>
    </citation>
    <scope>DEVELOPMENTAL STAGE</scope>
    <scope>SUBCELLULAR LOCATION</scope>
</reference>
<reference key="8">
    <citation type="journal article" date="1998" name="Chromosome Res.">
        <title>Association of pKi-67 with satellite DNA of the human genome in early G1 cells.</title>
        <authorList>
            <person name="Bridger J.M."/>
            <person name="Kill I.R."/>
            <person name="Lichter P."/>
        </authorList>
    </citation>
    <scope>SUBCELLULAR LOCATION</scope>
</reference>
<reference key="9">
    <citation type="journal article" date="1999" name="Exp. Cell Res.">
        <title>Biochemical characterization of pKi67 with the identification of a mitotic-specific form associated with hyperphosphorylation and altered DNA binding.</title>
        <authorList>
            <person name="MacCallum D.E."/>
            <person name="Hall P.A."/>
        </authorList>
    </citation>
    <scope>PHOSPHORYLATION</scope>
</reference>
<reference key="10">
    <citation type="journal article" date="2000" name="J. Biol. Chem.">
        <title>The forkhead-associated domain of Ki-67 antigen interacts with the novel kinesin-like protein Hklp2.</title>
        <authorList>
            <person name="Sueishi M."/>
            <person name="Takagi M."/>
            <person name="Yoneda Y."/>
        </authorList>
    </citation>
    <scope>INTERACTION WITH KIF15</scope>
</reference>
<reference key="11">
    <citation type="journal article" date="2000" name="J. Cell. Physiol.">
        <title>Posttranslational modifications of the KI-67 protein coincide with two major checkpoints during mitosis.</title>
        <authorList>
            <person name="Endl E."/>
            <person name="Gerdes J."/>
        </authorList>
    </citation>
    <scope>PHOSPHORYLATION</scope>
</reference>
<reference key="12">
    <citation type="journal article" date="2000" name="J. Pathol.">
        <title>The biochemical characterization of the DNA binding activity of pKi67.</title>
        <authorList>
            <person name="MacCallum D.E."/>
            <person name="Hall P.A."/>
        </authorList>
    </citation>
    <scope>FUNCTION</scope>
    <scope>DNA-BINDING</scope>
    <scope>SUBCELLULAR LOCATION</scope>
</reference>
<reference key="13">
    <citation type="journal article" date="2001" name="J. Biol. Chem.">
        <title>A novel nucleolar protein, NIFK, interacts with the forkhead associated domain of Ki-67 antigen in mitosis.</title>
        <authorList>
            <person name="Takagi M."/>
            <person name="Sueishi M."/>
            <person name="Saiwaki T."/>
            <person name="Kametaka A."/>
            <person name="Yoneda Y."/>
        </authorList>
    </citation>
    <scope>INTERACTION WITH NIFK</scope>
</reference>
<reference key="14">
    <citation type="journal article" date="2005" name="Exp. Cell Res.">
        <title>In vivo dynamics and kinetics of pKi-67: transition from a mobile to an immobile form at the onset of anaphase.</title>
        <authorList>
            <person name="Saiwaki T."/>
            <person name="Kotera I."/>
            <person name="Sasaki M."/>
            <person name="Takagi M."/>
            <person name="Yoneda Y."/>
        </authorList>
    </citation>
    <scope>SUBCELLULAR LOCATION</scope>
</reference>
<reference key="15">
    <citation type="journal article" date="2006" name="Cell">
        <title>Global, in vivo, and site-specific phosphorylation dynamics in signaling networks.</title>
        <authorList>
            <person name="Olsen J.V."/>
            <person name="Blagoev B."/>
            <person name="Gnad F."/>
            <person name="Macek B."/>
            <person name="Kumar C."/>
            <person name="Mortensen P."/>
            <person name="Mann M."/>
        </authorList>
    </citation>
    <scope>PHOSPHORYLATION [LARGE SCALE ANALYSIS] AT THR-2406 AND SER-2708</scope>
    <scope>IDENTIFICATION BY MASS SPECTROMETRY [LARGE SCALE ANALYSIS]</scope>
    <source>
        <tissue>Cervix carcinoma</tissue>
    </source>
</reference>
<reference key="16">
    <citation type="journal article" date="2006" name="Nat. Biotechnol.">
        <title>A probability-based approach for high-throughput protein phosphorylation analysis and site localization.</title>
        <authorList>
            <person name="Beausoleil S.A."/>
            <person name="Villen J."/>
            <person name="Gerber S.A."/>
            <person name="Rush J."/>
            <person name="Gygi S.P."/>
        </authorList>
    </citation>
    <scope>PHOSPHORYLATION [LARGE SCALE ANALYSIS] AT THR-328; SER-357; SER-579; SER-584; SER-1131; THR-1327; THR-1569; THR-1801; THR-1923 AND THR-2406</scope>
    <scope>IDENTIFICATION BY MASS SPECTROMETRY [LARGE SCALE ANALYSIS]</scope>
    <source>
        <tissue>Cervix carcinoma</tissue>
    </source>
</reference>
<reference key="17">
    <citation type="journal article" date="2007" name="J. Proteome Res.">
        <title>Improved titanium dioxide enrichment of phosphopeptides from HeLa cells and high confident phosphopeptide identification by cross-validation of MS/MS and MS/MS/MS spectra.</title>
        <authorList>
            <person name="Yu L.R."/>
            <person name="Zhu Z."/>
            <person name="Chan K.C."/>
            <person name="Issaq H.J."/>
            <person name="Dimitrov D.S."/>
            <person name="Veenstra T.D."/>
        </authorList>
    </citation>
    <scope>PHOSPHORYLATION [LARGE SCALE ANALYSIS] AT THR-1233; THR-1355; SER-1679 AND THR-1764</scope>
    <scope>IDENTIFICATION BY MASS SPECTROMETRY [LARGE SCALE ANALYSIS]</scope>
    <source>
        <tissue>Cervix carcinoma</tissue>
    </source>
</reference>
<reference key="18">
    <citation type="journal article" date="2008" name="J. Proteome Res.">
        <title>Combining protein-based IMAC, peptide-based IMAC, and MudPIT for efficient phosphoproteomic analysis.</title>
        <authorList>
            <person name="Cantin G.T."/>
            <person name="Yi W."/>
            <person name="Lu B."/>
            <person name="Park S.K."/>
            <person name="Xu T."/>
            <person name="Lee J.-D."/>
            <person name="Yates J.R. III"/>
        </authorList>
    </citation>
    <scope>PHOSPHORYLATION [LARGE SCALE ANALYSIS] AT SER-357; SER-579; SER-584 AND SER-1861</scope>
    <scope>IDENTIFICATION BY MASS SPECTROMETRY [LARGE SCALE ANALYSIS]</scope>
    <source>
        <tissue>Cervix carcinoma</tissue>
    </source>
</reference>
<reference key="19">
    <citation type="journal article" date="2008" name="Mol. Cell">
        <title>Kinase-selective enrichment enables quantitative phosphoproteomics of the kinome across the cell cycle.</title>
        <authorList>
            <person name="Daub H."/>
            <person name="Olsen J.V."/>
            <person name="Bairlein M."/>
            <person name="Gnad F."/>
            <person name="Oppermann F.S."/>
            <person name="Korner R."/>
            <person name="Greff Z."/>
            <person name="Keri G."/>
            <person name="Stemmann O."/>
            <person name="Mann M."/>
        </authorList>
    </citation>
    <scope>PHOSPHORYLATION [LARGE SCALE ANALYSIS] AT SER-308; SER-357; SER-579; SER-648 AND SER-1679</scope>
    <scope>IDENTIFICATION BY MASS SPECTROMETRY [LARGE SCALE ANALYSIS]</scope>
    <source>
        <tissue>Cervix carcinoma</tissue>
    </source>
</reference>
<reference key="20">
    <citation type="journal article" date="2008" name="Proc. Natl. Acad. Sci. U.S.A.">
        <title>Covalent capture of kinase-specific phosphopeptides reveals Cdk1-cyclin B substrates.</title>
        <authorList>
            <person name="Blethrow J.D."/>
            <person name="Glavy J.S."/>
            <person name="Morgan D.O."/>
            <person name="Shokat K.M."/>
        </authorList>
    </citation>
    <scope>PHOSPHORYLATION [LARGE SCALE ANALYSIS]</scope>
</reference>
<reference key="21">
    <citation type="journal article" date="2008" name="Proc. Natl. Acad. Sci. U.S.A.">
        <title>A quantitative atlas of mitotic phosphorylation.</title>
        <authorList>
            <person name="Dephoure N."/>
            <person name="Zhou C."/>
            <person name="Villen J."/>
            <person name="Beausoleil S.A."/>
            <person name="Bakalarski C.E."/>
            <person name="Elledge S.J."/>
            <person name="Gygi S.P."/>
        </authorList>
    </citation>
    <scope>PHOSPHORYLATION [LARGE SCALE ANALYSIS] AT SER-125; SER-264; SER-308; THR-328; THR-347; SER-357; THR-401; SER-579; SER-584; SER-648; THR-761; SER-859; THR-1017; SER-1071; THR-1091; SER-1098; THR-1111; SER-1131; THR-1139; SER-1142; SER-1207; SER-1253; SER-1256; THR-1261; THR-1298; THR-1315; THR-1327; SER-1329; THR-1335; THR-1355; SER-1376; THR-1383; THR-1503; SER-1506; THR-1540; TYR-1552; THR-1557; THR-1569; SER-1571; SER-1679; SER-1689; THR-1719; SER-1721; SER-1740; THR-1747; THR-1784; THR-1801; THR-1841; SER-1861; SER-1864; THR-1869; THR-1923; THR-2065; SER-2072; THR-2085; SER-2105; THR-2113; THR-2203; SER-2223; THR-2231; SER-2239; THR-2285; THR-2325; THR-2328; THR-2333; SER-2344; THR-2352; THR-2389; SER-2395; THR-2406; SER-2528; SER-2588; SER-2708; SER-2827; SER-2828 AND SER-3041</scope>
    <scope>IDENTIFICATION BY MASS SPECTROMETRY [LARGE SCALE ANALYSIS]</scope>
    <source>
        <tissue>Cervix carcinoma</tissue>
    </source>
</reference>
<reference key="22">
    <citation type="journal article" date="2009" name="Anal. Chem.">
        <title>Lys-N and trypsin cover complementary parts of the phosphoproteome in a refined SCX-based approach.</title>
        <authorList>
            <person name="Gauci S."/>
            <person name="Helbig A.O."/>
            <person name="Slijper M."/>
            <person name="Krijgsveld J."/>
            <person name="Heck A.J."/>
            <person name="Mohammed S."/>
        </authorList>
    </citation>
    <scope>IDENTIFICATION BY MASS SPECTROMETRY [LARGE SCALE ANALYSIS]</scope>
</reference>
<reference key="23">
    <citation type="journal article" date="2009" name="J. Biol. Chem.">
        <title>Identification and characterization of a novel nuclear protein complex involved in nuclear hormone receptor-mediated gene regulation.</title>
        <authorList>
            <person name="Garapaty S."/>
            <person name="Xu C.F."/>
            <person name="Trojer P."/>
            <person name="Mahajan M.A."/>
            <person name="Neubert T.A."/>
            <person name="Samuels H.H."/>
        </authorList>
    </citation>
    <scope>IDENTIFICATION IN A COMPLEX WITH ZNF335; HCFC1; CCAR2; EMSY; MKI67; RBBP5; ASH2L AND WDR5</scope>
</reference>
<reference key="24">
    <citation type="journal article" date="2009" name="Mol. Cell. Proteomics">
        <title>Large-scale proteomics analysis of the human kinome.</title>
        <authorList>
            <person name="Oppermann F.S."/>
            <person name="Gnad F."/>
            <person name="Olsen J.V."/>
            <person name="Hornberger R."/>
            <person name="Greff Z."/>
            <person name="Keri G."/>
            <person name="Mann M."/>
            <person name="Daub H."/>
        </authorList>
    </citation>
    <scope>PHOSPHORYLATION [LARGE SCALE ANALYSIS] AT SER-579</scope>
    <scope>IDENTIFICATION BY MASS SPECTROMETRY [LARGE SCALE ANALYSIS]</scope>
</reference>
<reference key="25">
    <citation type="journal article" date="2009" name="Sci. Signal.">
        <title>Quantitative phosphoproteomic analysis of T cell receptor signaling reveals system-wide modulation of protein-protein interactions.</title>
        <authorList>
            <person name="Mayya V."/>
            <person name="Lundgren D.H."/>
            <person name="Hwang S.-I."/>
            <person name="Rezaul K."/>
            <person name="Wu L."/>
            <person name="Eng J.K."/>
            <person name="Rodionov V."/>
            <person name="Han D.K."/>
        </authorList>
    </citation>
    <scope>PHOSPHORYLATION [LARGE SCALE ANALYSIS] AT SER-648; SER-1131; THR-1335; THR-1557; THR-1764; SER-1937; THR-2406 AND SER-2420</scope>
    <scope>IDENTIFICATION BY MASS SPECTROMETRY [LARGE SCALE ANALYSIS]</scope>
    <source>
        <tissue>Leukemic T-cell</tissue>
    </source>
</reference>
<reference key="26">
    <citation type="journal article" date="2009" name="Science">
        <title>Lysine acetylation targets protein complexes and co-regulates major cellular functions.</title>
        <authorList>
            <person name="Choudhary C."/>
            <person name="Kumar C."/>
            <person name="Gnad F."/>
            <person name="Nielsen M.L."/>
            <person name="Rehman M."/>
            <person name="Walther T.C."/>
            <person name="Olsen J.V."/>
            <person name="Mann M."/>
        </authorList>
    </citation>
    <scope>ACETYLATION [LARGE SCALE ANALYSIS] AT LYS-1639 AND LYS-2005</scope>
    <scope>IDENTIFICATION BY MASS SPECTROMETRY [LARGE SCALE ANALYSIS]</scope>
</reference>
<reference key="27">
    <citation type="journal article" date="2010" name="Sci. Signal.">
        <title>Quantitative phosphoproteomics reveals widespread full phosphorylation site occupancy during mitosis.</title>
        <authorList>
            <person name="Olsen J.V."/>
            <person name="Vermeulen M."/>
            <person name="Santamaria A."/>
            <person name="Kumar C."/>
            <person name="Miller M.L."/>
            <person name="Jensen L.J."/>
            <person name="Gnad F."/>
            <person name="Cox J."/>
            <person name="Jensen T.S."/>
            <person name="Nigg E.A."/>
            <person name="Brunak S."/>
            <person name="Mann M."/>
        </authorList>
    </citation>
    <scope>PHOSPHORYLATION [LARGE SCALE ANALYSIS] AT SER-308; SER-357; SER-579; SER-584; SER-648; THR-1091; SER-1098; SER-1131; THR-1167; THR-1193; SER-1207; THR-1233; THR-1315; THR-1327; SER-1329; THR-1335; THR-1355; THR-1557; THR-1569; SER-1571; SER-1679; THR-1747; THR-1801; SER-1815; SER-1861; THR-1897; THR-1923; SER-1937; THR-1963; SER-1983; THR-2065; SER-2072; THR-2085; SER-2105; SER-2135; SER-2223; THR-2231; THR-2233; SER-2239; THR-2268; THR-2285; THR-2325; SER-2344; THR-2389; SER-2395; THR-2406; SER-2420; THR-2446; SER-2528; SER-2588; SER-2708 AND SER-3128</scope>
    <scope>IDENTIFICATION BY MASS SPECTROMETRY [LARGE SCALE ANALYSIS]</scope>
    <source>
        <tissue>Cervix carcinoma</tissue>
    </source>
</reference>
<reference key="28">
    <citation type="journal article" date="2011" name="J. Natl. Cancer Inst.">
        <title>Assessment of Ki67 in breast cancer: recommendations from the International Ki67 in Breast Cancer working group.</title>
        <authorList>
            <consortium name="International Ki-67 in Breast Cancer Working Group"/>
            <person name="Dowsett M."/>
            <person name="Nielsen T.O."/>
            <person name="A'Hern R."/>
            <person name="Bartlett J."/>
            <person name="Coombes R.C."/>
            <person name="Cuzick J."/>
            <person name="Ellis M."/>
            <person name="Henry N.L."/>
            <person name="Hugh J.C."/>
            <person name="Lively T."/>
            <person name="McShane L."/>
            <person name="Paik S."/>
            <person name="Penault-Llorca F."/>
            <person name="Prudkin L."/>
            <person name="Regan M."/>
            <person name="Salter J."/>
            <person name="Sotiriou C."/>
            <person name="Smith I.E."/>
            <person name="Viale G."/>
            <person name="Zujewski J.A."/>
            <person name="Hayes D.F."/>
        </authorList>
    </citation>
    <scope>REVIEW ON BIOTECHNOLOGY</scope>
</reference>
<reference key="29">
    <citation type="journal article" date="2011" name="Sci. Signal.">
        <title>System-wide temporal characterization of the proteome and phosphoproteome of human embryonic stem cell differentiation.</title>
        <authorList>
            <person name="Rigbolt K.T."/>
            <person name="Prokhorova T.A."/>
            <person name="Akimov V."/>
            <person name="Henningsen J."/>
            <person name="Johansen P.T."/>
            <person name="Kratchmarova I."/>
            <person name="Kassem M."/>
            <person name="Mann M."/>
            <person name="Olsen J.V."/>
            <person name="Blagoev B."/>
        </authorList>
    </citation>
    <scope>PHOSPHORYLATION [LARGE SCALE ANALYSIS] AT SER-308; SER-352; SER-357; SER-1098; SER-1131; SER-1496; SER-1861; SER-1983; SER-2072; SER-2105; SER-2344; SER-2528; SER-2588 AND SER-2708</scope>
    <scope>IDENTIFICATION BY MASS SPECTROMETRY [LARGE SCALE ANALYSIS]</scope>
</reference>
<reference key="30">
    <citation type="journal article" date="2012" name="Cell">
        <title>Microcephaly gene links trithorax and REST/NRSF to control neural stem cell proliferation and differentiation.</title>
        <authorList>
            <person name="Yang Y.J."/>
            <person name="Baltus A.E."/>
            <person name="Mathew R.S."/>
            <person name="Murphy E.A."/>
            <person name="Evrony G.D."/>
            <person name="Gonzalez D.M."/>
            <person name="Wang E.P."/>
            <person name="Marshall-Walker C.A."/>
            <person name="Barry B.J."/>
            <person name="Murn J."/>
            <person name="Tatarakis A."/>
            <person name="Mahajan M.A."/>
            <person name="Samuels H.H."/>
            <person name="Shi Y."/>
            <person name="Golden J.A."/>
            <person name="Mahajnah M."/>
            <person name="Shenhav R."/>
            <person name="Walsh C.A."/>
        </authorList>
    </citation>
    <scope>INTERACTION WITH ZNF335</scope>
</reference>
<reference key="31">
    <citation type="journal article" date="2012" name="Mol. Cell. Proteomics">
        <title>Systematic analysis of protein pools, isoforms, and modifications affecting turnover and subcellular localization.</title>
        <authorList>
            <person name="Ahmad Y."/>
            <person name="Boisvert F.M."/>
            <person name="Lundberg E."/>
            <person name="Uhlen M."/>
            <person name="Lamond A.I."/>
        </authorList>
    </citation>
    <scope>SUBCELLULAR LOCATION [LARGE SCALE ANALYSIS]</scope>
</reference>
<reference key="32">
    <citation type="journal article" date="2013" name="J. Proteome Res.">
        <title>Toward a comprehensive characterization of a human cancer cell phosphoproteome.</title>
        <authorList>
            <person name="Zhou H."/>
            <person name="Di Palma S."/>
            <person name="Preisinger C."/>
            <person name="Peng M."/>
            <person name="Polat A.N."/>
            <person name="Heck A.J."/>
            <person name="Mohammed S."/>
        </authorList>
    </citation>
    <scope>PHOSPHORYLATION [LARGE SCALE ANALYSIS] AT SER-125; SER-128; SER-308; THR-328; THR-347; SER-357; SER-411; SER-538; THR-543; SER-579; SER-584; SER-648; THR-761; SER-859; SER-1071; THR-1091; SER-1098; THR-1111; SER-1131; THR-1176; SER-1207; THR-1233; THR-1327; SER-1329; THR-1335; THR-1355; THR-1503; THR-1557; THR-1569; SER-1571; THR-1764; THR-1784; THR-1801; SER-1815; THR-1841; SER-1861; THR-1923; SER-1937; THR-1963; THR-2065; SER-2072; THR-2085; SER-2105; SER-2135; SER-2223; THR-2231; THR-2325; SER-2344; THR-2389; THR-2406; SER-2420; THR-2426; THR-2446; SER-2466; SER-2505; SER-2528; SER-2588; SER-2638 AND SER-3041</scope>
    <scope>IDENTIFICATION BY MASS SPECTROMETRY [LARGE SCALE ANALYSIS]</scope>
    <source>
        <tissue>Cervix carcinoma</tissue>
        <tissue>Erythroleukemia</tissue>
    </source>
</reference>
<reference key="33">
    <citation type="journal article" date="2014" name="Elife">
        <title>Ki-67 is a PP1-interacting protein that organises the mitotic chromosome periphery.</title>
        <authorList>
            <person name="Booth D.G."/>
            <person name="Takagi M."/>
            <person name="Sanchez-Pulido L."/>
            <person name="Petfalski E."/>
            <person name="Vargiu G."/>
            <person name="Samejima K."/>
            <person name="Imamoto N."/>
            <person name="Ponting C.P."/>
            <person name="Tollervey D."/>
            <person name="Earnshaw W.C."/>
            <person name="Vagnarelli P."/>
        </authorList>
    </citation>
    <scope>FUNCTION</scope>
    <scope>INTERACTION WITH PPP1CC</scope>
</reference>
<reference key="34">
    <citation type="journal article" date="2014" name="J. Biol. Chem.">
        <title>Ki67 antigen contributes to the timely accumulation of protein phosphatase 1gamma on anaphase chromosomes.</title>
        <authorList>
            <person name="Takagi M."/>
            <person name="Nishiyama Y."/>
            <person name="Taguchi A."/>
            <person name="Imamoto N."/>
        </authorList>
    </citation>
    <scope>INTERACTION WITH PPP1CC</scope>
    <scope>PHOSPHORYLATION</scope>
    <scope>DEPHOSPHORYLATION</scope>
    <scope>MUTAGENESIS OF 506-VAL--PHE-508</scope>
</reference>
<reference key="35">
    <citation type="journal article" date="2014" name="Nat. Struct. Mol. Biol.">
        <title>Uncovering global SUMOylation signaling networks in a site-specific manner.</title>
        <authorList>
            <person name="Hendriks I.A."/>
            <person name="D'Souza R.C."/>
            <person name="Yang B."/>
            <person name="Verlaan-de Vries M."/>
            <person name="Mann M."/>
            <person name="Vertegaal A.C."/>
        </authorList>
    </citation>
    <scope>SUMOYLATION [LARGE SCALE ANALYSIS] AT LYS-1035; LYS-1643; LYS-2613; LYS-2734 AND LYS-2852</scope>
    <scope>IDENTIFICATION BY MASS SPECTROMETRY [LARGE SCALE ANALYSIS]</scope>
</reference>
<reference key="36">
    <citation type="journal article" date="2014" name="Proc. Natl. Acad. Sci. U.S.A.">
        <title>Mapping of SUMO sites and analysis of SUMOylation changes induced by external stimuli.</title>
        <authorList>
            <person name="Impens F."/>
            <person name="Radoshevich L."/>
            <person name="Cossart P."/>
            <person name="Ribet D."/>
        </authorList>
    </citation>
    <scope>SUMOYLATION [LARGE SCALE ANALYSIS] AT LYS-1093; LYS-2009; LYS-2067; LYS-2492; LYS-2613; LYS-2734 AND LYS-2852</scope>
    <scope>IDENTIFICATION BY MASS SPECTROMETRY [LARGE SCALE ANALYSIS]</scope>
</reference>
<reference key="37">
    <citation type="journal article" date="2015" name="Cell Rep.">
        <title>SUMO-2 orchestrates chromatin modifiers in response to DNA damage.</title>
        <authorList>
            <person name="Hendriks I.A."/>
            <person name="Treffers L.W."/>
            <person name="Verlaan-de Vries M."/>
            <person name="Olsen J.V."/>
            <person name="Vertegaal A.C."/>
        </authorList>
    </citation>
    <scope>SUMOYLATION [LARGE SCALE ANALYSIS] AT LYS-1035; LYS-1643; LYS-2009 AND LYS-2734</scope>
    <scope>IDENTIFICATION BY MASS SPECTROMETRY [LARGE SCALE ANALYSIS]</scope>
</reference>
<reference key="38">
    <citation type="journal article" date="2015" name="Mol. Cell. Proteomics">
        <title>System-wide analysis of SUMOylation dynamics in response to replication stress reveals novel small ubiquitin-like modified target proteins and acceptor lysines relevant for genome stability.</title>
        <authorList>
            <person name="Xiao Z."/>
            <person name="Chang J.G."/>
            <person name="Hendriks I.A."/>
            <person name="Sigurdsson J.O."/>
            <person name="Olsen J.V."/>
            <person name="Vertegaal A.C."/>
        </authorList>
    </citation>
    <scope>SUMOYLATION [LARGE SCALE ANALYSIS] AT LYS-1035 AND LYS-1643</scope>
    <scope>IDENTIFICATION BY MASS SPECTROMETRY [LARGE SCALE ANALYSIS]</scope>
</reference>
<reference key="39">
    <citation type="journal article" date="2016" name="J. Clin. Pathol.">
        <title>The assessment of Ki-67 as a prognostic marker in neuroendocrine tumours: a systematic review and meta-analysis.</title>
        <authorList>
            <person name="Richards-Taylor S."/>
            <person name="Ewings S.M."/>
            <person name="Jaynes E."/>
            <person name="Tilley C."/>
            <person name="Ellis S.G."/>
            <person name="Armstrong T."/>
            <person name="Pearce N."/>
            <person name="Cave J."/>
        </authorList>
    </citation>
    <scope>REVIEW ON BIOTECHNOLOGY</scope>
</reference>
<reference key="40">
    <citation type="journal article" date="2016" name="Nature">
        <title>Ki-67 acts as a biological surfactant to disperse mitotic chromosomes.</title>
        <authorList>
            <person name="Cuylen S."/>
            <person name="Blaukopf C."/>
            <person name="Politi A.Z."/>
            <person name="Mueller-Reichert T."/>
            <person name="Neumann B."/>
            <person name="Poser I."/>
            <person name="Ellenberg J."/>
            <person name="Hyman A.A."/>
            <person name="Gerlich D.W."/>
        </authorList>
    </citation>
    <scope>FUNCTION</scope>
    <scope>SUBCELLULAR LOCATION</scope>
</reference>
<reference key="41">
    <citation type="journal article" date="2017" name="Biochem. Biophys. Res. Commun.">
        <title>The hierarchical structure of the perichromosomal layer comprises Ki67, ribosomal RNAs, and nucleolar proteins.</title>
        <authorList>
            <person name="Hayashi Y."/>
            <person name="Kato K."/>
            <person name="Kimura K."/>
        </authorList>
    </citation>
    <scope>FUNCTION</scope>
</reference>
<reference key="42">
    <citation type="journal article" date="2017" name="Nat. Struct. Mol. Biol.">
        <title>Site-specific mapping of the human SUMO proteome reveals co-modification with phosphorylation.</title>
        <authorList>
            <person name="Hendriks I.A."/>
            <person name="Lyon D."/>
            <person name="Young C."/>
            <person name="Jensen L.J."/>
            <person name="Vertegaal A.C."/>
            <person name="Nielsen M.L."/>
        </authorList>
    </citation>
    <scope>SUMOYLATION [LARGE SCALE ANALYSIS] AT LYS-245; LYS-1022; LYS-1035; LYS-1093; LYS-1185; LYS-1188; LYS-1337; LYS-1643; LYS-1703; LYS-2009; LYS-2067; LYS-2613; LYS-2734; LYS-2852 AND LYS-2967</scope>
    <scope>IDENTIFICATION BY MASS SPECTROMETRY [LARGE SCALE ANALYSIS]</scope>
</reference>
<reference key="43">
    <citation type="journal article" date="2020" name="Nature">
        <title>Chromosome clustering by Ki-67 excludes cytoplasm during nuclear assembly.</title>
        <authorList>
            <person name="Cuylen-Haering S."/>
            <person name="Petrovic M."/>
            <person name="Hernandez-Armendariz A."/>
            <person name="Schneider M.W.G."/>
            <person name="Samwer M."/>
            <person name="Blaukopf C."/>
            <person name="Holt L.J."/>
            <person name="Gerlich D.W."/>
        </authorList>
    </citation>
    <scope>FUNCTION</scope>
    <scope>SUBCELLULAR LOCATION</scope>
</reference>
<reference key="44">
    <citation type="journal article" date="2022" name="Mol. Cell">
        <title>APC7 mediates ubiquitin signaling in constitutive heterochromatin in the developing mammalian brain.</title>
        <authorList>
            <person name="Ferguson C.J."/>
            <person name="Urso O."/>
            <person name="Bodrug T."/>
            <person name="Gassaway B.M."/>
            <person name="Watson E.R."/>
            <person name="Prabu J.R."/>
            <person name="Lara-Gonzalez P."/>
            <person name="Martinez-Chacin R.C."/>
            <person name="Wu D.Y."/>
            <person name="Brigatti K.W."/>
            <person name="Puffenberger E.G."/>
            <person name="Taylor C.M."/>
            <person name="Haas-Givler B."/>
            <person name="Jinks R.N."/>
            <person name="Strauss K.A."/>
            <person name="Desai A."/>
            <person name="Gabel H.W."/>
            <person name="Gygi S.P."/>
            <person name="Schulman B.A."/>
            <person name="Brown N.G."/>
            <person name="Bonni A."/>
        </authorList>
    </citation>
    <scope>UBIQUITINATION</scope>
</reference>
<reference key="45">
    <citation type="journal article" date="2022" name="Nat. Cell Biol.">
        <title>Cell cycle-specific phase separation regulated by protein charge blockiness.</title>
        <authorList>
            <person name="Yamazaki H."/>
            <person name="Takagi M."/>
            <person name="Kosako H."/>
            <person name="Hirano T."/>
            <person name="Yoshimura S.H."/>
        </authorList>
    </citation>
    <scope>FUNCTION</scope>
</reference>
<reference key="46">
    <citation type="journal article" date="2024" name="Mol. Cell">
        <title>A liquid-like coat mediates chromosome clustering during mitotic exit.</title>
        <authorList>
            <person name="Hernandez-Armendariz A."/>
            <person name="Sorichetti V."/>
            <person name="Hayashi Y."/>
            <person name="Koskova Z."/>
            <person name="Brunner A."/>
            <person name="Ellenberg J."/>
            <person name="Saric A."/>
            <person name="Cuylen-Haering S."/>
        </authorList>
    </citation>
    <scope>FUNCTION</scope>
    <scope>SUBCELLULAR LOCATION</scope>
    <scope>DOMAIN</scope>
    <scope>PHOSPHORYLATION</scope>
    <scope>DEPHOSPHORYLATION</scope>
    <scope>MUTAGENESIS OF 502-LYS--LYS-678 AND 506-VAL--PHE-508</scope>
</reference>
<reference key="47">
    <citation type="journal article" date="2004" name="J. Mol. Biol.">
        <title>Structure of human Ki67 FHA domain and its binding to a phosphoprotein fragment from hNIFK reveal unique recognition sites and new views to the structural basis of FHA domain functions.</title>
        <authorList>
            <person name="Li H."/>
            <person name="Byeon I.-J."/>
            <person name="Ju Y."/>
            <person name="Tsai M.-D."/>
        </authorList>
    </citation>
    <scope>STRUCTURE BY NMR OF 1-120 IN COMPLEX WITH NIFK</scope>
</reference>
<reference key="48">
    <citation type="journal article" date="2005" name="Nat. Struct. Mol. Biol.">
        <title>Sequential phosphorylation and multisite interactions characterize specific target recognition by the FHA domain of Ki67.</title>
        <authorList>
            <person name="Byeon I.-J."/>
            <person name="Li H."/>
            <person name="Song H."/>
            <person name="Gronenborn A.M."/>
            <person name="Tsai M.-D."/>
        </authorList>
    </citation>
    <scope>STRUCTURE BY NMR OF 1-120 IN COMPLEX WITH NIFK</scope>
</reference>
<proteinExistence type="evidence at protein level"/>
<dbReference type="EMBL" id="X65550">
    <property type="protein sequence ID" value="CAA46519.1"/>
    <property type="molecule type" value="mRNA"/>
</dbReference>
<dbReference type="EMBL" id="X65551">
    <property type="protein sequence ID" value="CAA46520.1"/>
    <property type="molecule type" value="mRNA"/>
</dbReference>
<dbReference type="EMBL" id="AL355529">
    <property type="status" value="NOT_ANNOTATED_CDS"/>
    <property type="molecule type" value="Genomic_DNA"/>
</dbReference>
<dbReference type="EMBL" id="AL390236">
    <property type="status" value="NOT_ANNOTATED_CDS"/>
    <property type="molecule type" value="Genomic_DNA"/>
</dbReference>
<dbReference type="EMBL" id="X94762">
    <property type="protein sequence ID" value="CAA64388.1"/>
    <property type="molecule type" value="Genomic_DNA"/>
</dbReference>
<dbReference type="CCDS" id="CCDS53588.1">
    <molecule id="P46013-2"/>
</dbReference>
<dbReference type="CCDS" id="CCDS7659.1">
    <molecule id="P46013-1"/>
</dbReference>
<dbReference type="PIR" id="A48666">
    <property type="entry name" value="A48666"/>
</dbReference>
<dbReference type="RefSeq" id="NP_001139438.1">
    <molecule id="P46013-2"/>
    <property type="nucleotide sequence ID" value="NM_001145966.2"/>
</dbReference>
<dbReference type="RefSeq" id="NP_002408.3">
    <molecule id="P46013-1"/>
    <property type="nucleotide sequence ID" value="NM_002417.4"/>
</dbReference>
<dbReference type="PDB" id="1R21">
    <property type="method" value="NMR"/>
    <property type="chains" value="A=1-120"/>
</dbReference>
<dbReference type="PDB" id="2AFF">
    <property type="method" value="NMR"/>
    <property type="chains" value="A=1-120"/>
</dbReference>
<dbReference type="PDB" id="5J28">
    <property type="method" value="X-ray"/>
    <property type="resolution" value="2.00 A"/>
    <property type="chains" value="C/D=496-536"/>
</dbReference>
<dbReference type="PDBsum" id="1R21"/>
<dbReference type="PDBsum" id="2AFF"/>
<dbReference type="PDBsum" id="5J28"/>
<dbReference type="BMRB" id="P46013"/>
<dbReference type="SMR" id="P46013"/>
<dbReference type="BioGRID" id="110434">
    <property type="interactions" value="663"/>
</dbReference>
<dbReference type="DIP" id="DIP-28132N"/>
<dbReference type="FunCoup" id="P46013">
    <property type="interactions" value="1628"/>
</dbReference>
<dbReference type="IntAct" id="P46013">
    <property type="interactions" value="558"/>
</dbReference>
<dbReference type="MINT" id="P46013"/>
<dbReference type="STRING" id="9606.ENSP00000357643"/>
<dbReference type="CarbonylDB" id="P46013"/>
<dbReference type="GlyCosmos" id="P46013">
    <property type="glycosylation" value="1 site, 1 glycan"/>
</dbReference>
<dbReference type="GlyGen" id="P46013">
    <property type="glycosylation" value="19 sites, 1 O-linked glycan (19 sites)"/>
</dbReference>
<dbReference type="iPTMnet" id="P46013"/>
<dbReference type="MetOSite" id="P46013"/>
<dbReference type="PhosphoSitePlus" id="P46013"/>
<dbReference type="SwissPalm" id="P46013"/>
<dbReference type="BioMuta" id="MKI67"/>
<dbReference type="DMDM" id="118572663"/>
<dbReference type="CPTAC" id="CPTAC-5908"/>
<dbReference type="CPTAC" id="CPTAC-5909"/>
<dbReference type="CPTAC" id="CPTAC-5910"/>
<dbReference type="jPOST" id="P46013"/>
<dbReference type="MassIVE" id="P46013"/>
<dbReference type="PaxDb" id="9606-ENSP00000357643"/>
<dbReference type="PeptideAtlas" id="P46013"/>
<dbReference type="ProteomicsDB" id="55705">
    <molecule id="P46013-1"/>
</dbReference>
<dbReference type="ProteomicsDB" id="55706">
    <molecule id="P46013-2"/>
</dbReference>
<dbReference type="Pumba" id="P46013"/>
<dbReference type="Antibodypedia" id="741">
    <property type="antibodies" value="2423 antibodies from 60 providers"/>
</dbReference>
<dbReference type="CPTC" id="P46013">
    <property type="antibodies" value="4 antibodies"/>
</dbReference>
<dbReference type="DNASU" id="4288"/>
<dbReference type="Ensembl" id="ENST00000368653.7">
    <molecule id="P46013-2"/>
    <property type="protein sequence ID" value="ENSP00000357642.3"/>
    <property type="gene ID" value="ENSG00000148773.14"/>
</dbReference>
<dbReference type="Ensembl" id="ENST00000368654.8">
    <molecule id="P46013-1"/>
    <property type="protein sequence ID" value="ENSP00000357643.3"/>
    <property type="gene ID" value="ENSG00000148773.14"/>
</dbReference>
<dbReference type="GeneID" id="4288"/>
<dbReference type="KEGG" id="hsa:4288"/>
<dbReference type="MANE-Select" id="ENST00000368654.8">
    <property type="protein sequence ID" value="ENSP00000357643.3"/>
    <property type="RefSeq nucleotide sequence ID" value="NM_002417.5"/>
    <property type="RefSeq protein sequence ID" value="NP_002408.3"/>
</dbReference>
<dbReference type="UCSC" id="uc001lke.4">
    <molecule id="P46013-1"/>
    <property type="organism name" value="human"/>
</dbReference>
<dbReference type="AGR" id="HGNC:7107"/>
<dbReference type="CTD" id="4288"/>
<dbReference type="DisGeNET" id="4288"/>
<dbReference type="GeneCards" id="MKI67"/>
<dbReference type="HGNC" id="HGNC:7107">
    <property type="gene designation" value="MKI67"/>
</dbReference>
<dbReference type="HPA" id="ENSG00000148773">
    <property type="expression patterns" value="Group enriched (bone marrow, lymphoid tissue)"/>
</dbReference>
<dbReference type="MalaCards" id="MKI67"/>
<dbReference type="MIM" id="176741">
    <property type="type" value="gene"/>
</dbReference>
<dbReference type="neXtProt" id="NX_P46013"/>
<dbReference type="OpenTargets" id="ENSG00000148773"/>
<dbReference type="PharmGKB" id="PA30825"/>
<dbReference type="VEuPathDB" id="HostDB:ENSG00000148773"/>
<dbReference type="eggNOG" id="ENOG502QRVV">
    <property type="taxonomic scope" value="Eukaryota"/>
</dbReference>
<dbReference type="GeneTree" id="ENSGT00940000154352"/>
<dbReference type="HOGENOM" id="CLU_000534_0_0_1"/>
<dbReference type="InParanoid" id="P46013"/>
<dbReference type="OMA" id="TPNHTDK"/>
<dbReference type="OrthoDB" id="6288785at2759"/>
<dbReference type="PAN-GO" id="P46013">
    <property type="GO annotations" value="4 GO annotations based on evolutionary models"/>
</dbReference>
<dbReference type="PhylomeDB" id="P46013"/>
<dbReference type="TreeFam" id="TF336000"/>
<dbReference type="PathwayCommons" id="P46013"/>
<dbReference type="SignaLink" id="P46013"/>
<dbReference type="SIGNOR" id="P46013"/>
<dbReference type="BioGRID-ORCS" id="4288">
    <property type="hits" value="18 hits in 1174 CRISPR screens"/>
</dbReference>
<dbReference type="CD-CODE" id="91857CE7">
    <property type="entry name" value="Nucleolus"/>
</dbReference>
<dbReference type="CD-CODE" id="DEE660B4">
    <property type="entry name" value="Stress granule"/>
</dbReference>
<dbReference type="ChiTaRS" id="MKI67">
    <property type="organism name" value="human"/>
</dbReference>
<dbReference type="EvolutionaryTrace" id="P46013"/>
<dbReference type="GeneWiki" id="Ki-67_(protein)"/>
<dbReference type="GenomeRNAi" id="4288"/>
<dbReference type="Pharos" id="P46013">
    <property type="development level" value="Tbio"/>
</dbReference>
<dbReference type="PRO" id="PR:P46013"/>
<dbReference type="Proteomes" id="UP000005640">
    <property type="component" value="Chromosome 10"/>
</dbReference>
<dbReference type="RNAct" id="P46013">
    <property type="molecule type" value="protein"/>
</dbReference>
<dbReference type="Bgee" id="ENSG00000148773">
    <property type="expression patterns" value="Expressed in ventricular zone and 141 other cell types or tissues"/>
</dbReference>
<dbReference type="GO" id="GO:0005694">
    <property type="term" value="C:chromosome"/>
    <property type="evidence" value="ECO:0000314"/>
    <property type="project" value="HPA"/>
</dbReference>
<dbReference type="GO" id="GO:0000793">
    <property type="term" value="C:condensed chromosome"/>
    <property type="evidence" value="ECO:0000314"/>
    <property type="project" value="UniProtKB"/>
</dbReference>
<dbReference type="GO" id="GO:0016020">
    <property type="term" value="C:membrane"/>
    <property type="evidence" value="ECO:0007005"/>
    <property type="project" value="UniProtKB"/>
</dbReference>
<dbReference type="GO" id="GO:0005730">
    <property type="term" value="C:nucleolus"/>
    <property type="evidence" value="ECO:0000314"/>
    <property type="project" value="HPA"/>
</dbReference>
<dbReference type="GO" id="GO:0005654">
    <property type="term" value="C:nucleoplasm"/>
    <property type="evidence" value="ECO:0000314"/>
    <property type="project" value="HPA"/>
</dbReference>
<dbReference type="GO" id="GO:0005634">
    <property type="term" value="C:nucleus"/>
    <property type="evidence" value="ECO:0000314"/>
    <property type="project" value="UniProtKB"/>
</dbReference>
<dbReference type="GO" id="GO:0005524">
    <property type="term" value="F:ATP binding"/>
    <property type="evidence" value="ECO:0007669"/>
    <property type="project" value="UniProtKB-KW"/>
</dbReference>
<dbReference type="GO" id="GO:0003677">
    <property type="term" value="F:DNA binding"/>
    <property type="evidence" value="ECO:0007669"/>
    <property type="project" value="UniProtKB-KW"/>
</dbReference>
<dbReference type="GO" id="GO:0140693">
    <property type="term" value="F:molecular condensate scaffold activity"/>
    <property type="evidence" value="ECO:0000314"/>
    <property type="project" value="UniProtKB"/>
</dbReference>
<dbReference type="GO" id="GO:0003723">
    <property type="term" value="F:RNA binding"/>
    <property type="evidence" value="ECO:0000314"/>
    <property type="project" value="UniProtKB"/>
</dbReference>
<dbReference type="GO" id="GO:0008283">
    <property type="term" value="P:cell population proliferation"/>
    <property type="evidence" value="ECO:0000304"/>
    <property type="project" value="ProtInc"/>
</dbReference>
<dbReference type="GO" id="GO:0007059">
    <property type="term" value="P:chromosome segregation"/>
    <property type="evidence" value="ECO:0000314"/>
    <property type="project" value="UniProtKB"/>
</dbReference>
<dbReference type="GO" id="GO:1902275">
    <property type="term" value="P:regulation of chromatin organization"/>
    <property type="evidence" value="ECO:0000250"/>
    <property type="project" value="UniProtKB"/>
</dbReference>
<dbReference type="GO" id="GO:0007088">
    <property type="term" value="P:regulation of mitotic nuclear division"/>
    <property type="evidence" value="ECO:0000314"/>
    <property type="project" value="UniProtKB"/>
</dbReference>
<dbReference type="CDD" id="cd22673">
    <property type="entry name" value="FHA_Ki67"/>
    <property type="match status" value="1"/>
</dbReference>
<dbReference type="FunFam" id="2.60.200.20:FF:000033">
    <property type="entry name" value="proliferation marker protein Ki-67"/>
    <property type="match status" value="1"/>
</dbReference>
<dbReference type="Gene3D" id="2.60.200.20">
    <property type="match status" value="1"/>
</dbReference>
<dbReference type="InterPro" id="IPR000253">
    <property type="entry name" value="FHA_dom"/>
</dbReference>
<dbReference type="InterPro" id="IPR012568">
    <property type="entry name" value="KI67R"/>
</dbReference>
<dbReference type="InterPro" id="IPR029334">
    <property type="entry name" value="PP1-bd"/>
</dbReference>
<dbReference type="InterPro" id="IPR008984">
    <property type="entry name" value="SMAD_FHA_dom_sf"/>
</dbReference>
<dbReference type="PANTHER" id="PTHR21603">
    <property type="entry name" value="ANTIGEN KI-67-LIKE PROTEIN"/>
    <property type="match status" value="1"/>
</dbReference>
<dbReference type="PANTHER" id="PTHR21603:SF17">
    <property type="entry name" value="PROLIFERATION MARKER PROTEIN KI-67"/>
    <property type="match status" value="1"/>
</dbReference>
<dbReference type="Pfam" id="PF00498">
    <property type="entry name" value="FHA"/>
    <property type="match status" value="1"/>
</dbReference>
<dbReference type="Pfam" id="PF08065">
    <property type="entry name" value="KI67R"/>
    <property type="match status" value="16"/>
</dbReference>
<dbReference type="Pfam" id="PF15276">
    <property type="entry name" value="PP1_bind"/>
    <property type="match status" value="1"/>
</dbReference>
<dbReference type="SMART" id="SM00240">
    <property type="entry name" value="FHA"/>
    <property type="match status" value="1"/>
</dbReference>
<dbReference type="SMART" id="SM01295">
    <property type="entry name" value="K167R"/>
    <property type="match status" value="16"/>
</dbReference>
<dbReference type="SUPFAM" id="SSF49879">
    <property type="entry name" value="SMAD/FHA domain"/>
    <property type="match status" value="1"/>
</dbReference>
<dbReference type="PROSITE" id="PS50006">
    <property type="entry name" value="FHA_DOMAIN"/>
    <property type="match status" value="1"/>
</dbReference>
<keyword id="KW-0002">3D-structure</keyword>
<keyword id="KW-0007">Acetylation</keyword>
<keyword id="KW-0025">Alternative splicing</keyword>
<keyword id="KW-0067">ATP-binding</keyword>
<keyword id="KW-0131">Cell cycle</keyword>
<keyword id="KW-0158">Chromosome</keyword>
<keyword id="KW-0238">DNA-binding</keyword>
<keyword id="KW-1017">Isopeptide bond</keyword>
<keyword id="KW-0547">Nucleotide-binding</keyword>
<keyword id="KW-0539">Nucleus</keyword>
<keyword id="KW-0597">Phosphoprotein</keyword>
<keyword id="KW-1267">Proteomics identification</keyword>
<keyword id="KW-1185">Reference proteome</keyword>
<keyword id="KW-0677">Repeat</keyword>
<keyword id="KW-0832">Ubl conjugation</keyword>
<name>KI67_HUMAN</name>
<protein>
    <recommendedName>
        <fullName evidence="33">Proliferation marker protein Ki-67</fullName>
    </recommendedName>
    <alternativeName>
        <fullName evidence="32">Antigen identified by monoclonal antibody Ki-67</fullName>
        <shortName evidence="33">Antigen KI-67</shortName>
        <shortName evidence="33">Antigen Ki67</shortName>
    </alternativeName>
</protein>